<accession>Q9HC84</accession>
<accession>O00447</accession>
<accession>O00573</accession>
<accession>O14985</accession>
<accession>O15494</accession>
<accession>O95291</accession>
<accession>O95451</accession>
<accession>Q14881</accession>
<accession>Q7M4S5</accession>
<accession>Q99552</accession>
<accession>Q9UE28</accession>
<reference key="1">
    <citation type="journal article" date="2001" name="Am. J. Respir. Cell Mol. Biol.">
        <title>Characterization of human mucin 5B gene expression in airway epithelium and the genomic clone of the amino-terminal and 5'-flanking region.</title>
        <authorList>
            <person name="Chen Y."/>
            <person name="Zhao Y.H."/>
            <person name="Di Y.P."/>
            <person name="Wu R."/>
        </authorList>
    </citation>
    <scope>NUCLEOTIDE SEQUENCE [GENOMIC DNA] OF 1-1593</scope>
    <scope>INDUCTION</scope>
    <scope>TISSUE SPECIFICITY</scope>
    <scope>VARIANT GLY-34</scope>
</reference>
<reference key="2">
    <citation type="journal article" date="1998" name="Biochem. Biophys. Res. Commun.">
        <title>The amino-terminal sequence of MUC5B contains conserved multifunctional D domains: implications for tissue-specific mucin functions.</title>
        <authorList>
            <person name="Offner G.D."/>
            <person name="Nunes D.P."/>
            <person name="Keates A.C."/>
            <person name="Afdhal N.H."/>
            <person name="Troxler R.F."/>
        </authorList>
    </citation>
    <scope>NUCLEOTIDE SEQUENCE [MRNA] OF 1-1324</scope>
</reference>
<reference key="3">
    <citation type="journal article" date="1998" name="J. Biol. Chem.">
        <title>Genomic organization of the human mucin gene MUC5B: cDNA and genomic sequences upstream of the large central exon.</title>
        <authorList>
            <person name="Desseyn J.-L."/>
            <person name="Buisine M.P."/>
            <person name="Porchet N."/>
            <person name="Aubert J.-P."/>
            <person name="Laine A."/>
        </authorList>
    </citation>
    <scope>NUCLEOTIDE SEQUENCE [GENOMIC DNA] OF 28-1323</scope>
    <scope>VARIANT GLY-34</scope>
</reference>
<reference key="4">
    <citation type="journal article" date="1997" name="J. Biol. Chem.">
        <title>Human mucin gene MUC5B, the 10.7 kb large central exon encodes various alternate subdomains resulting in a super-repeat. Structural evidence for a 11p15.5 gene family.</title>
        <authorList>
            <person name="Desseyn J.-L."/>
            <person name="Guyonnet-Duperat V."/>
            <person name="Porchet N."/>
            <person name="Aubert J.-P."/>
            <person name="Laine A."/>
        </authorList>
    </citation>
    <scope>NUCLEOTIDE SEQUENCE [GENOMIC DNA] OF 1325-4954</scope>
    <scope>NUCLEOTIDE SEQUENCE [MRNA] OF 4170-4791</scope>
    <scope>VARIANTS SER-1805; LEU-1889; THR-2025; THR-2194; PRO-2238; THR-2425; SER-3072; ALA-3284; PRO-3468; MET-3816; GLY-4404; LEU-4440; PRO-4706; MET-4712; THR-4867 AND ALA-4882</scope>
    <source>
        <tissue>Placenta</tissue>
        <tissue>Tracheobronchial mucosa</tissue>
    </source>
</reference>
<reference key="5">
    <citation type="journal article" date="1989" name="J. Biol. Chem.">
        <title>Proteolytic fragmentation and peptide mapping of human carboxyamidomethylated tracheobronchial mucin.</title>
        <authorList>
            <person name="Rose M.C."/>
            <person name="Kaufman B."/>
            <person name="Martin B.M."/>
        </authorList>
    </citation>
    <scope>PROTEIN SEQUENCE OF 2346-2358; 2903-2915; 3603-3615 AND 4160-4172</scope>
    <source>
        <tissue>Tracheobronchial mucosa</tissue>
    </source>
</reference>
<reference key="6">
    <citation type="journal article" date="1997" name="Glycobiology">
        <title>Identification of a major human high molecular weight salivary mucin (MG1) as tracheobronchial mucin MUC5B.</title>
        <authorList>
            <person name="Nielsen P.A."/>
            <person name="Bennett E.P."/>
            <person name="Wandall H.H."/>
            <person name="Therkildsen M.H."/>
            <person name="Hannibal J."/>
            <person name="Clausen H."/>
        </authorList>
    </citation>
    <scope>NUCLEOTIDE SEQUENCE [MRNA] OF 2301-3811</scope>
    <scope>TISSUE SPECIFICITY</scope>
    <source>
        <tissue>Salivary gland</tissue>
    </source>
</reference>
<reference key="7">
    <citation type="journal article" date="1997" name="Biochem. J.">
        <title>Molecular cloning of a major human gall bladder mucin: complete C-terminal sequence and genomic organization of MUC5B.</title>
        <authorList>
            <person name="Keates A.C."/>
            <person name="Nunes D.P."/>
            <person name="Afdhal N.H."/>
            <person name="Troxler R.F."/>
            <person name="Offner G.D."/>
        </authorList>
    </citation>
    <scope>NUCLEOTIDE SEQUENCE [GENOMIC DNA] OF 4780-5423</scope>
    <scope>NUCLEOTIDE SEQUENCE [MRNA] OF 5373-5762</scope>
    <scope>TISSUE SPECIFICITY</scope>
    <source>
        <tissue>Gall bladder</tissue>
    </source>
</reference>
<reference key="8">
    <citation type="journal article" date="1995" name="Biochem. Biophys. Res. Commun.">
        <title>Molecular cloning of a novel high molecular weight mucin (MG1) from human sublingual gland.</title>
        <authorList>
            <person name="Troxler R.F."/>
            <person name="Offner G.D."/>
            <person name="Zhang F."/>
            <person name="Iontcheva I."/>
            <person name="Oppenheim F.G."/>
        </authorList>
    </citation>
    <scope>NUCLEOTIDE SEQUENCE [MRNA] OF 4868-5746</scope>
    <scope>TISSUE SPECIFICITY</scope>
    <source>
        <tissue>Sublingual gland</tissue>
    </source>
</reference>
<reference key="9">
    <citation type="journal article" date="1997" name="J. Biol. Chem.">
        <title>Genomic organization of the 3 region of the human MUC5B mucin.</title>
        <authorList>
            <person name="Desseyn J.-L."/>
            <person name="Aubert J.-P."/>
            <person name="Porchet N."/>
            <person name="Laine A."/>
        </authorList>
    </citation>
    <scope>NUCLEOTIDE SEQUENCE [GENOMIC DNA] OF 4918-5762</scope>
    <scope>VARIANT THR-5196</scope>
    <source>
        <tissue>Placenta</tissue>
    </source>
</reference>
<reference key="10">
    <citation type="journal article" date="2001" name="Glycobiology">
        <title>In vivo glycosylation of mucin tandem repeats.</title>
        <authorList>
            <person name="Silverman H.S."/>
            <person name="Parry S."/>
            <person name="Sutton-Smith M."/>
            <person name="Burdick M.D."/>
            <person name="McDermott K."/>
            <person name="Reid C.J."/>
            <person name="Batra S.K."/>
            <person name="Morris H.R."/>
            <person name="Hollingsworth M.A."/>
            <person name="Dell A."/>
            <person name="Harris A."/>
        </authorList>
    </citation>
    <scope>STRUCTURE OF O-LINKED CARBOHYDRATES</scope>
    <scope>IDENTIFICATION BY MASS SPECTROMETRY</scope>
</reference>
<reference key="11">
    <citation type="journal article" date="2004" name="Glycobiology">
        <title>C-Mannosylation of MUC5AC and MUC5B Cys subdomains.</title>
        <authorList>
            <person name="Perez-Vilar J."/>
            <person name="Randell S.H."/>
            <person name="Boucher R.C."/>
        </authorList>
    </citation>
    <scope>GLYCOSYLATION</scope>
    <scope>MUTAGENESIS OF TRP-1790</scope>
</reference>
<reference key="12">
    <citation type="journal article" date="2006" name="J. Proteome Res.">
        <title>Identification of N-linked glycoproteins in human saliva by glycoprotein capture and mass spectrometry.</title>
        <authorList>
            <person name="Ramachandran P."/>
            <person name="Boontheung P."/>
            <person name="Xie Y."/>
            <person name="Sondej M."/>
            <person name="Wong D.T."/>
            <person name="Loo J.A."/>
        </authorList>
    </citation>
    <scope>GLYCOSYLATION [LARGE SCALE ANALYSIS] AT ASN-145; ASN-254; ASN-1556; ASN-4960; ASN-5017; ASN-5024; ASN-5046; ASN-5096; ASN-5111 AND ASN-5215</scope>
    <source>
        <tissue>Saliva</tissue>
    </source>
</reference>
<reference key="13">
    <citation type="journal article" date="2011" name="N. Engl. J. Med.">
        <title>A common MUC5B promoter polymorphism and pulmonary fibrosis.</title>
        <authorList>
            <person name="Seibold M.A."/>
            <person name="Wise A.L."/>
            <person name="Speer M.C."/>
            <person name="Steele M.P."/>
            <person name="Brown K.K."/>
            <person name="Loyd J.E."/>
            <person name="Fingerlin T.E."/>
            <person name="Zhang W."/>
            <person name="Gudmundsson G."/>
            <person name="Groshong S.D."/>
            <person name="Evans C.M."/>
            <person name="Garantziotis S."/>
            <person name="Adler K.B."/>
            <person name="Dickey B.F."/>
            <person name="du Bois R.M."/>
            <person name="Yang I.V."/>
            <person name="Herron A."/>
            <person name="Kervitsky D."/>
            <person name="Talbert J.L."/>
            <person name="Markin C."/>
            <person name="Park J."/>
            <person name="Crews A.L."/>
            <person name="Slifer S.H."/>
            <person name="Auerbach S."/>
            <person name="Roy M.G."/>
            <person name="Lin J."/>
            <person name="Hennessy C.E."/>
            <person name="Schwarz M.I."/>
            <person name="Schwartz D.A."/>
        </authorList>
    </citation>
    <scope>INVOLVEMENT IN ILD2</scope>
</reference>
<reference key="14">
    <citation type="journal article" date="2011" name="N. Engl. J. Med.">
        <title>A variant in the promoter of MUC5B and idiopathic pulmonary fibrosis.</title>
        <authorList>
            <person name="Zhang Y."/>
            <person name="Noth I."/>
            <person name="Garcia J.G."/>
            <person name="Kaminski N."/>
        </authorList>
    </citation>
    <scope>INVOLVEMENT IN ILD2</scope>
</reference>
<reference key="15">
    <citation type="journal article" date="2019" name="J. Biol. Chem.">
        <title>The C-terminal dimerization domain of the respiratory mucin MUC5B functions in mucin stability and intracellular packaging before secretion.</title>
        <authorList>
            <person name="Ridley C."/>
            <person name="Lockhart-Cairns M.P."/>
            <person name="Collins R.F."/>
            <person name="Jowitt T.A."/>
            <person name="Subramani D.B."/>
            <person name="Kesimer M."/>
            <person name="Baldock C."/>
            <person name="Thornton D.J."/>
        </authorList>
    </citation>
    <scope>DISULFIDE BOND</scope>
</reference>
<dbReference type="EMBL" id="AF107890">
    <property type="protein sequence ID" value="AAG33673.1"/>
    <property type="molecule type" value="Genomic_DNA"/>
</dbReference>
<dbReference type="EMBL" id="AF086604">
    <property type="protein sequence ID" value="AAC67545.1"/>
    <property type="molecule type" value="mRNA"/>
</dbReference>
<dbReference type="EMBL" id="AJ004862">
    <property type="protein sequence ID" value="CAA06167.1"/>
    <property type="status" value="ALT_INIT"/>
    <property type="molecule type" value="Genomic_DNA"/>
</dbReference>
<dbReference type="EMBL" id="X74955">
    <property type="protein sequence ID" value="CAA52910.1"/>
    <property type="molecule type" value="mRNA"/>
</dbReference>
<dbReference type="EMBL" id="Z72496">
    <property type="protein sequence ID" value="CAA96577.1"/>
    <property type="molecule type" value="Genomic_DNA"/>
</dbReference>
<dbReference type="EMBL" id="U63836">
    <property type="protein sequence ID" value="AAB61398.1"/>
    <property type="molecule type" value="mRNA"/>
</dbReference>
<dbReference type="EMBL" id="U78551">
    <property type="protein sequence ID" value="AAC51343.1"/>
    <property type="molecule type" value="mRNA"/>
</dbReference>
<dbReference type="EMBL" id="AH006676">
    <property type="protein sequence ID" value="AAC51344.1"/>
    <property type="molecule type" value="Genomic_DNA"/>
</dbReference>
<dbReference type="EMBL" id="U95031">
    <property type="protein sequence ID" value="AAB65151.1"/>
    <property type="molecule type" value="mRNA"/>
</dbReference>
<dbReference type="EMBL" id="Y09788">
    <property type="protein sequence ID" value="CAA70926.1"/>
    <property type="molecule type" value="Genomic_DNA"/>
</dbReference>
<dbReference type="CCDS" id="CCDS44515.2"/>
<dbReference type="PIR" id="A33811">
    <property type="entry name" value="A33811"/>
</dbReference>
<dbReference type="PIR" id="T45025">
    <property type="entry name" value="T45025"/>
</dbReference>
<dbReference type="RefSeq" id="NP_002449.2">
    <property type="nucleotide sequence ID" value="NM_002458.3"/>
</dbReference>
<dbReference type="PDB" id="8OES">
    <property type="method" value="EM"/>
    <property type="resolution" value="3.00 A"/>
    <property type="chains" value="A/B/C/D/E/F/G/H=26-1252, I/J/K/L/M/N=1333-1432"/>
</dbReference>
<dbReference type="PDBsum" id="8OES"/>
<dbReference type="EMDB" id="EMD-10264"/>
<dbReference type="EMDB" id="EMD-10336"/>
<dbReference type="EMDB" id="EMD-10339"/>
<dbReference type="EMDB" id="EMD-16808"/>
<dbReference type="SMR" id="Q9HC84"/>
<dbReference type="BioGRID" id="608337">
    <property type="interactions" value="55"/>
</dbReference>
<dbReference type="CORUM" id="Q9HC84"/>
<dbReference type="FunCoup" id="Q9HC84">
    <property type="interactions" value="277"/>
</dbReference>
<dbReference type="IntAct" id="Q9HC84">
    <property type="interactions" value="30"/>
</dbReference>
<dbReference type="MINT" id="Q9HC84"/>
<dbReference type="STRING" id="9606.ENSP00000436812"/>
<dbReference type="MEROPS" id="I08.953"/>
<dbReference type="GlyConnect" id="1520">
    <property type="glycosylation" value="15 N-Linked glycans (10 sites), 6 O-Linked glycans"/>
</dbReference>
<dbReference type="GlyConnect" id="376">
    <property type="glycosylation" value="10 O-Linked glycans"/>
</dbReference>
<dbReference type="GlyCosmos" id="Q9HC84">
    <property type="glycosylation" value="38 sites, 41 glycans"/>
</dbReference>
<dbReference type="GlyGen" id="Q9HC84">
    <property type="glycosylation" value="132 sites, 18 N-linked glycans (10 sites), 29 O-linked glycans (16 sites)"/>
</dbReference>
<dbReference type="iPTMnet" id="Q9HC84"/>
<dbReference type="PhosphoSitePlus" id="Q9HC84"/>
<dbReference type="SwissPalm" id="Q9HC84"/>
<dbReference type="BioMuta" id="MUC5B"/>
<dbReference type="DMDM" id="308153579"/>
<dbReference type="jPOST" id="Q9HC84"/>
<dbReference type="MassIVE" id="Q9HC84"/>
<dbReference type="PaxDb" id="9606-ENSP00000436812"/>
<dbReference type="PeptideAtlas" id="Q9HC84"/>
<dbReference type="PRIDE" id="Q9HC84"/>
<dbReference type="Antibodypedia" id="1456">
    <property type="antibodies" value="335 antibodies from 34 providers"/>
</dbReference>
<dbReference type="DNASU" id="727897"/>
<dbReference type="Ensembl" id="ENST00000529681.5">
    <property type="protein sequence ID" value="ENSP00000436812.1"/>
    <property type="gene ID" value="ENSG00000117983.17"/>
</dbReference>
<dbReference type="GeneID" id="727897"/>
<dbReference type="KEGG" id="hsa:727897"/>
<dbReference type="MANE-Select" id="ENST00000529681.5">
    <property type="protein sequence ID" value="ENSP00000436812.1"/>
    <property type="RefSeq nucleotide sequence ID" value="NM_002458.3"/>
    <property type="RefSeq protein sequence ID" value="NP_002449.2"/>
</dbReference>
<dbReference type="UCSC" id="uc001lta.4">
    <property type="organism name" value="human"/>
</dbReference>
<dbReference type="AGR" id="HGNC:7516"/>
<dbReference type="CTD" id="727897"/>
<dbReference type="DisGeNET" id="727897"/>
<dbReference type="GeneCards" id="MUC5B"/>
<dbReference type="HGNC" id="HGNC:7516">
    <property type="gene designation" value="MUC5B"/>
</dbReference>
<dbReference type="HPA" id="ENSG00000117983">
    <property type="expression patterns" value="Tissue enriched (salivary)"/>
</dbReference>
<dbReference type="MalaCards" id="MUC5B"/>
<dbReference type="MIM" id="178500">
    <property type="type" value="phenotype"/>
</dbReference>
<dbReference type="MIM" id="600770">
    <property type="type" value="gene"/>
</dbReference>
<dbReference type="neXtProt" id="NX_Q9HC84"/>
<dbReference type="OpenTargets" id="ENSG00000117983"/>
<dbReference type="Orphanet" id="171700">
    <property type="disease" value="Diffuse panbronchiolitis"/>
</dbReference>
<dbReference type="Orphanet" id="31740">
    <property type="disease" value="Hypersensitivity pneumonitis"/>
</dbReference>
<dbReference type="Orphanet" id="2032">
    <property type="disease" value="Idiopathic pulmonary fibrosis"/>
</dbReference>
<dbReference type="PharmGKB" id="PA31321"/>
<dbReference type="VEuPathDB" id="HostDB:ENSG00000117983"/>
<dbReference type="eggNOG" id="KOG1216">
    <property type="taxonomic scope" value="Eukaryota"/>
</dbReference>
<dbReference type="GeneTree" id="ENSGT00940000162219"/>
<dbReference type="HOGENOM" id="CLU_000076_3_1_1"/>
<dbReference type="InParanoid" id="Q9HC84"/>
<dbReference type="OMA" id="TWILTEP"/>
<dbReference type="OrthoDB" id="160294at2759"/>
<dbReference type="PAN-GO" id="Q9HC84">
    <property type="GO annotations" value="2 GO annotations based on evolutionary models"/>
</dbReference>
<dbReference type="TreeFam" id="TF300299"/>
<dbReference type="PathwayCommons" id="Q9HC84"/>
<dbReference type="Reactome" id="R-HSA-5083625">
    <property type="pathway name" value="Defective GALNT3 causes HFTC"/>
</dbReference>
<dbReference type="Reactome" id="R-HSA-5083632">
    <property type="pathway name" value="Defective C1GALT1C1 causes TNPS"/>
</dbReference>
<dbReference type="Reactome" id="R-HSA-5083636">
    <property type="pathway name" value="Defective GALNT12 causes CRCS1"/>
</dbReference>
<dbReference type="Reactome" id="R-HSA-5621480">
    <property type="pathway name" value="Dectin-2 family"/>
</dbReference>
<dbReference type="Reactome" id="R-HSA-913709">
    <property type="pathway name" value="O-linked glycosylation of mucins"/>
</dbReference>
<dbReference type="Reactome" id="R-HSA-977068">
    <property type="pathway name" value="Termination of O-glycan biosynthesis"/>
</dbReference>
<dbReference type="SignaLink" id="Q9HC84"/>
<dbReference type="BioGRID-ORCS" id="727897">
    <property type="hits" value="14 hits in 1145 CRISPR screens"/>
</dbReference>
<dbReference type="ChiTaRS" id="MUC5B">
    <property type="organism name" value="human"/>
</dbReference>
<dbReference type="GeneWiki" id="MUC5B"/>
<dbReference type="GenomeRNAi" id="727897"/>
<dbReference type="Pharos" id="Q9HC84">
    <property type="development level" value="Tbio"/>
</dbReference>
<dbReference type="PRO" id="PR:Q9HC84"/>
<dbReference type="Proteomes" id="UP000005640">
    <property type="component" value="Chromosome 11"/>
</dbReference>
<dbReference type="RNAct" id="Q9HC84">
    <property type="molecule type" value="protein"/>
</dbReference>
<dbReference type="Bgee" id="ENSG00000117983">
    <property type="expression patterns" value="Expressed in trachea and 121 other cell types or tissues"/>
</dbReference>
<dbReference type="ExpressionAtlas" id="Q9HC84">
    <property type="expression patterns" value="baseline and differential"/>
</dbReference>
<dbReference type="GO" id="GO:0070062">
    <property type="term" value="C:extracellular exosome"/>
    <property type="evidence" value="ECO:0007005"/>
    <property type="project" value="UniProtKB"/>
</dbReference>
<dbReference type="GO" id="GO:0031012">
    <property type="term" value="C:extracellular matrix"/>
    <property type="evidence" value="ECO:0000318"/>
    <property type="project" value="GO_Central"/>
</dbReference>
<dbReference type="GO" id="GO:0005615">
    <property type="term" value="C:extracellular space"/>
    <property type="evidence" value="ECO:0007005"/>
    <property type="project" value="UniProtKB"/>
</dbReference>
<dbReference type="GO" id="GO:0005796">
    <property type="term" value="C:Golgi lumen"/>
    <property type="evidence" value="ECO:0000304"/>
    <property type="project" value="Reactome"/>
</dbReference>
<dbReference type="GO" id="GO:0043231">
    <property type="term" value="C:intracellular membrane-bounded organelle"/>
    <property type="evidence" value="ECO:0000314"/>
    <property type="project" value="HPA"/>
</dbReference>
<dbReference type="GO" id="GO:0005886">
    <property type="term" value="C:plasma membrane"/>
    <property type="evidence" value="ECO:0000304"/>
    <property type="project" value="Reactome"/>
</dbReference>
<dbReference type="GO" id="GO:0046872">
    <property type="term" value="F:metal ion binding"/>
    <property type="evidence" value="ECO:0007669"/>
    <property type="project" value="UniProtKB-KW"/>
</dbReference>
<dbReference type="CDD" id="cd19941">
    <property type="entry name" value="TIL"/>
    <property type="match status" value="4"/>
</dbReference>
<dbReference type="FunFam" id="2.10.25.10:FF:000153">
    <property type="entry name" value="MUC5B isoform 1"/>
    <property type="match status" value="1"/>
</dbReference>
<dbReference type="FunFam" id="2.10.25.10:FF:000674">
    <property type="entry name" value="Mucin-2"/>
    <property type="match status" value="1"/>
</dbReference>
<dbReference type="FunFam" id="2.10.25.10:FF:000414">
    <property type="entry name" value="von Willebrand factor"/>
    <property type="match status" value="1"/>
</dbReference>
<dbReference type="Gene3D" id="2.10.25.10">
    <property type="entry name" value="Laminin"/>
    <property type="match status" value="4"/>
</dbReference>
<dbReference type="InterPro" id="IPR006207">
    <property type="entry name" value="Cys_knot_C"/>
</dbReference>
<dbReference type="InterPro" id="IPR050780">
    <property type="entry name" value="Mucin_vWF_Thrombospondin_sf"/>
</dbReference>
<dbReference type="InterPro" id="IPR036084">
    <property type="entry name" value="Ser_inhib-like_sf"/>
</dbReference>
<dbReference type="InterPro" id="IPR002919">
    <property type="entry name" value="TIL_dom"/>
</dbReference>
<dbReference type="InterPro" id="IPR014853">
    <property type="entry name" value="VWF/SSPO/ZAN-like_Cys-rich_dom"/>
</dbReference>
<dbReference type="InterPro" id="IPR001007">
    <property type="entry name" value="VWF_dom"/>
</dbReference>
<dbReference type="InterPro" id="IPR001846">
    <property type="entry name" value="VWF_type-D"/>
</dbReference>
<dbReference type="InterPro" id="IPR025155">
    <property type="entry name" value="WxxW_domain"/>
</dbReference>
<dbReference type="PANTHER" id="PTHR11339">
    <property type="entry name" value="EXTRACELLULAR MATRIX GLYCOPROTEIN RELATED"/>
    <property type="match status" value="1"/>
</dbReference>
<dbReference type="PANTHER" id="PTHR11339:SF408">
    <property type="entry name" value="MUCIN-5B"/>
    <property type="match status" value="1"/>
</dbReference>
<dbReference type="Pfam" id="PF08742">
    <property type="entry name" value="C8"/>
    <property type="match status" value="4"/>
</dbReference>
<dbReference type="Pfam" id="PF13330">
    <property type="entry name" value="Mucin2_WxxW"/>
    <property type="match status" value="7"/>
</dbReference>
<dbReference type="Pfam" id="PF01826">
    <property type="entry name" value="TIL"/>
    <property type="match status" value="2"/>
</dbReference>
<dbReference type="Pfam" id="PF00094">
    <property type="entry name" value="VWD"/>
    <property type="match status" value="4"/>
</dbReference>
<dbReference type="SMART" id="SM00832">
    <property type="entry name" value="C8"/>
    <property type="match status" value="4"/>
</dbReference>
<dbReference type="SMART" id="SM00041">
    <property type="entry name" value="CT"/>
    <property type="match status" value="1"/>
</dbReference>
<dbReference type="SMART" id="SM00214">
    <property type="entry name" value="VWC"/>
    <property type="match status" value="5"/>
</dbReference>
<dbReference type="SMART" id="SM00215">
    <property type="entry name" value="VWC_out"/>
    <property type="match status" value="3"/>
</dbReference>
<dbReference type="SMART" id="SM00216">
    <property type="entry name" value="VWD"/>
    <property type="match status" value="4"/>
</dbReference>
<dbReference type="SUPFAM" id="SSF57603">
    <property type="entry name" value="FnI-like domain"/>
    <property type="match status" value="2"/>
</dbReference>
<dbReference type="SUPFAM" id="SSF57567">
    <property type="entry name" value="Serine protease inhibitors"/>
    <property type="match status" value="4"/>
</dbReference>
<dbReference type="PROSITE" id="PS01185">
    <property type="entry name" value="CTCK_1"/>
    <property type="match status" value="1"/>
</dbReference>
<dbReference type="PROSITE" id="PS01225">
    <property type="entry name" value="CTCK_2"/>
    <property type="match status" value="1"/>
</dbReference>
<dbReference type="PROSITE" id="PS01208">
    <property type="entry name" value="VWFC_1"/>
    <property type="match status" value="2"/>
</dbReference>
<dbReference type="PROSITE" id="PS50184">
    <property type="entry name" value="VWFC_2"/>
    <property type="match status" value="2"/>
</dbReference>
<dbReference type="PROSITE" id="PS51233">
    <property type="entry name" value="VWFD"/>
    <property type="match status" value="4"/>
</dbReference>
<organism>
    <name type="scientific">Homo sapiens</name>
    <name type="common">Human</name>
    <dbReference type="NCBI Taxonomy" id="9606"/>
    <lineage>
        <taxon>Eukaryota</taxon>
        <taxon>Metazoa</taxon>
        <taxon>Chordata</taxon>
        <taxon>Craniata</taxon>
        <taxon>Vertebrata</taxon>
        <taxon>Euteleostomi</taxon>
        <taxon>Mammalia</taxon>
        <taxon>Eutheria</taxon>
        <taxon>Euarchontoglires</taxon>
        <taxon>Primates</taxon>
        <taxon>Haplorrhini</taxon>
        <taxon>Catarrhini</taxon>
        <taxon>Hominidae</taxon>
        <taxon>Homo</taxon>
    </lineage>
</organism>
<keyword id="KW-0002">3D-structure</keyword>
<keyword id="KW-0186">Copper</keyword>
<keyword id="KW-0903">Direct protein sequencing</keyword>
<keyword id="KW-1015">Disulfide bond</keyword>
<keyword id="KW-0325">Glycoprotein</keyword>
<keyword id="KW-0479">Metal-binding</keyword>
<keyword id="KW-1267">Proteomics identification</keyword>
<keyword id="KW-1185">Reference proteome</keyword>
<keyword id="KW-0677">Repeat</keyword>
<keyword id="KW-0964">Secreted</keyword>
<keyword id="KW-0732">Signal</keyword>
<protein>
    <recommendedName>
        <fullName>Mucin-5B</fullName>
        <shortName>MUC-5B</shortName>
    </recommendedName>
    <alternativeName>
        <fullName>Cervical mucin</fullName>
    </alternativeName>
    <alternativeName>
        <fullName>High molecular weight salivary mucin MG1</fullName>
    </alternativeName>
    <alternativeName>
        <fullName>Mucin-5 subtype B, tracheobronchial</fullName>
    </alternativeName>
    <alternativeName>
        <fullName>Sublingual gland mucin</fullName>
    </alternativeName>
</protein>
<feature type="signal peptide" evidence="3">
    <location>
        <begin position="1"/>
        <end position="25"/>
    </location>
</feature>
<feature type="chain" id="PRO_0000019283" description="Mucin-5B">
    <location>
        <begin position="26"/>
        <end position="5762"/>
    </location>
</feature>
<feature type="domain" description="VWFD 1" evidence="6">
    <location>
        <begin position="75"/>
        <end position="245"/>
    </location>
</feature>
<feature type="domain" description="TIL 1">
    <location>
        <begin position="329"/>
        <end position="385"/>
    </location>
</feature>
<feature type="domain" description="VWFD 2" evidence="6">
    <location>
        <begin position="423"/>
        <end position="598"/>
    </location>
</feature>
<feature type="domain" description="TIL 2">
    <location>
        <begin position="695"/>
        <end position="752"/>
    </location>
</feature>
<feature type="domain" description="TIL 3">
    <location>
        <begin position="805"/>
        <end position="855"/>
    </location>
</feature>
<feature type="domain" description="VWFC 1" evidence="5">
    <location>
        <begin position="855"/>
        <end position="927"/>
    </location>
</feature>
<feature type="domain" description="VWFD 3" evidence="6">
    <location>
        <begin position="893"/>
        <end position="1062"/>
    </location>
</feature>
<feature type="repeat" description="Cys-rich subdomain 1">
    <location>
        <begin position="1333"/>
        <end position="1432"/>
    </location>
</feature>
<feature type="repeat" description="Cys-rich subdomain 2">
    <location>
        <begin position="1503"/>
        <end position="1604"/>
    </location>
</feature>
<feature type="repeat" description="Cys-rich subdomain 3">
    <location>
        <begin position="1784"/>
        <end position="1885"/>
    </location>
</feature>
<feature type="repeat" description="Cys-rich subdomain 4">
    <location>
        <begin position="2313"/>
        <end position="2414"/>
    </location>
</feature>
<feature type="repeat" description="HAT 1">
    <location>
        <begin position="2854"/>
        <end position="2886"/>
    </location>
</feature>
<feature type="repeat" description="Cys-rich subdomain 5">
    <location>
        <begin position="2871"/>
        <end position="2971"/>
    </location>
</feature>
<feature type="repeat" description="HAT 2">
    <location>
        <begin position="3554"/>
        <end position="3586"/>
    </location>
</feature>
<feature type="repeat" description="Cys-rich subdomain 6">
    <location>
        <begin position="3571"/>
        <end position="3671"/>
    </location>
</feature>
<feature type="repeat" description="HAT 3">
    <location>
        <begin position="4111"/>
        <end position="4143"/>
    </location>
</feature>
<feature type="repeat" description="Cys-rich subdomain 7">
    <location>
        <begin position="4128"/>
        <end position="4228"/>
    </location>
</feature>
<feature type="domain" description="VWFD 4" evidence="6">
    <location>
        <begin position="5073"/>
        <end position="5261"/>
    </location>
</feature>
<feature type="domain" description="VWFC 2" evidence="5">
    <location>
        <begin position="5412"/>
        <end position="5484"/>
    </location>
</feature>
<feature type="domain" description="VWFC 3" evidence="5">
    <location>
        <begin position="5521"/>
        <end position="5587"/>
    </location>
</feature>
<feature type="domain" description="CTCK" evidence="4">
    <location>
        <begin position="5653"/>
        <end position="5742"/>
    </location>
</feature>
<feature type="region of interest" description="Disordered" evidence="7">
    <location>
        <begin position="27"/>
        <end position="50"/>
    </location>
</feature>
<feature type="region of interest" description="7 X Cys-rich subdomain repeats">
    <location>
        <begin position="1333"/>
        <end position="4228"/>
    </location>
</feature>
<feature type="region of interest" description="Disordered" evidence="7">
    <location>
        <begin position="1437"/>
        <end position="1462"/>
    </location>
</feature>
<feature type="region of interest" description="Disordered" evidence="7">
    <location>
        <begin position="1480"/>
        <end position="1502"/>
    </location>
</feature>
<feature type="region of interest" description="Disordered" evidence="7">
    <location>
        <begin position="1607"/>
        <end position="1783"/>
    </location>
</feature>
<feature type="region of interest" description="11 X approximate tandem repeats, Ser/Thr-rich">
    <location>
        <begin position="1890"/>
        <end position="2199"/>
    </location>
</feature>
<feature type="region of interest" description="Disordered" evidence="7">
    <location>
        <begin position="1890"/>
        <end position="2019"/>
    </location>
</feature>
<feature type="region of interest" description="Disordered" evidence="7">
    <location>
        <begin position="2031"/>
        <end position="2100"/>
    </location>
</feature>
<feature type="region of interest" description="Disordered" evidence="7">
    <location>
        <begin position="2114"/>
        <end position="2211"/>
    </location>
</feature>
<feature type="region of interest" description="Disordered" evidence="7">
    <location>
        <begin position="2242"/>
        <end position="2302"/>
    </location>
</feature>
<feature type="region of interest" description="11 X approximate tandem repeats, Ser/Thr-rich">
    <location>
        <begin position="2419"/>
        <end position="2756"/>
    </location>
</feature>
<feature type="region of interest" description="Disordered" evidence="7">
    <location>
        <begin position="2443"/>
        <end position="2462"/>
    </location>
</feature>
<feature type="region of interest" description="Disordered" evidence="7">
    <location>
        <begin position="2473"/>
        <end position="2522"/>
    </location>
</feature>
<feature type="region of interest" description="Disordered" evidence="7">
    <location>
        <begin position="2556"/>
        <end position="2861"/>
    </location>
</feature>
<feature type="region of interest" description="17 X approximate tandem repeats, Ser/Thr-rich">
    <location>
        <begin position="2976"/>
        <end position="3456"/>
    </location>
</feature>
<feature type="region of interest" description="Disordered" evidence="7">
    <location>
        <begin position="3001"/>
        <end position="3049"/>
    </location>
</feature>
<feature type="region of interest" description="Disordered" evidence="7">
    <location>
        <begin position="3256"/>
        <end position="3357"/>
    </location>
</feature>
<feature type="region of interest" description="Disordered" evidence="7">
    <location>
        <begin position="3371"/>
        <end position="3469"/>
    </location>
</feature>
<feature type="region of interest" description="Disordered" evidence="7">
    <location>
        <begin position="3481"/>
        <end position="3561"/>
    </location>
</feature>
<feature type="region of interest" description="11 X approximate tandem repeats, Ser/Thr-rich">
    <location>
        <begin position="3676"/>
        <end position="4013"/>
    </location>
</feature>
<feature type="region of interest" description="Disordered" evidence="7">
    <location>
        <begin position="3699"/>
        <end position="3779"/>
    </location>
</feature>
<feature type="region of interest" description="Disordered" evidence="7">
    <location>
        <begin position="3813"/>
        <end position="3917"/>
    </location>
</feature>
<feature type="region of interest" description="Disordered" evidence="7">
    <location>
        <begin position="3956"/>
        <end position="4118"/>
    </location>
</feature>
<feature type="region of interest" description="23 X approximate tandem repeats, Ser/Thr-rich">
    <location>
        <begin position="4233"/>
        <end position="4879"/>
    </location>
</feature>
<feature type="region of interest" description="Disordered" evidence="7">
    <location>
        <begin position="4259"/>
        <end position="4389"/>
    </location>
</feature>
<feature type="region of interest" description="Disordered" evidence="7">
    <location>
        <begin position="4428"/>
        <end position="4447"/>
    </location>
</feature>
<feature type="region of interest" description="Disordered" evidence="7">
    <location>
        <begin position="4458"/>
        <end position="4527"/>
    </location>
</feature>
<feature type="region of interest" description="Disordered" evidence="7">
    <location>
        <begin position="4541"/>
        <end position="4750"/>
    </location>
</feature>
<feature type="compositionally biased region" description="Low complexity" evidence="7">
    <location>
        <begin position="1450"/>
        <end position="1462"/>
    </location>
</feature>
<feature type="compositionally biased region" description="Low complexity" evidence="7">
    <location>
        <begin position="1614"/>
        <end position="1624"/>
    </location>
</feature>
<feature type="compositionally biased region" description="Polar residues" evidence="7">
    <location>
        <begin position="1625"/>
        <end position="1638"/>
    </location>
</feature>
<feature type="compositionally biased region" description="Polar residues" evidence="7">
    <location>
        <begin position="1645"/>
        <end position="1662"/>
    </location>
</feature>
<feature type="compositionally biased region" description="Low complexity" evidence="7">
    <location>
        <begin position="1663"/>
        <end position="1684"/>
    </location>
</feature>
<feature type="compositionally biased region" description="Polar residues" evidence="7">
    <location>
        <begin position="1689"/>
        <end position="1706"/>
    </location>
</feature>
<feature type="compositionally biased region" description="Low complexity" evidence="7">
    <location>
        <begin position="1739"/>
        <end position="1756"/>
    </location>
</feature>
<feature type="compositionally biased region" description="Low complexity" evidence="7">
    <location>
        <begin position="1765"/>
        <end position="1777"/>
    </location>
</feature>
<feature type="compositionally biased region" description="Low complexity" evidence="7">
    <location>
        <begin position="1890"/>
        <end position="1987"/>
    </location>
</feature>
<feature type="compositionally biased region" description="Polar residues" evidence="7">
    <location>
        <begin position="1988"/>
        <end position="1997"/>
    </location>
</feature>
<feature type="compositionally biased region" description="Low complexity" evidence="7">
    <location>
        <begin position="1998"/>
        <end position="2019"/>
    </location>
</feature>
<feature type="compositionally biased region" description="Low complexity" evidence="7">
    <location>
        <begin position="2114"/>
        <end position="2181"/>
    </location>
</feature>
<feature type="compositionally biased region" description="Polar residues" evidence="7">
    <location>
        <begin position="2182"/>
        <end position="2199"/>
    </location>
</feature>
<feature type="compositionally biased region" description="Low complexity" evidence="7">
    <location>
        <begin position="2556"/>
        <end position="2738"/>
    </location>
</feature>
<feature type="compositionally biased region" description="Polar residues" evidence="7">
    <location>
        <begin position="2739"/>
        <end position="2786"/>
    </location>
</feature>
<feature type="compositionally biased region" description="Low complexity" evidence="7">
    <location>
        <begin position="2787"/>
        <end position="2861"/>
    </location>
</feature>
<feature type="compositionally biased region" description="Low complexity" evidence="7">
    <location>
        <begin position="3001"/>
        <end position="3017"/>
    </location>
</feature>
<feature type="compositionally biased region" description="Low complexity" evidence="7">
    <location>
        <begin position="3026"/>
        <end position="3049"/>
    </location>
</feature>
<feature type="compositionally biased region" description="Low complexity" evidence="7">
    <location>
        <begin position="3371"/>
        <end position="3438"/>
    </location>
</feature>
<feature type="compositionally biased region" description="Polar residues" evidence="7">
    <location>
        <begin position="3439"/>
        <end position="3456"/>
    </location>
</feature>
<feature type="compositionally biased region" description="Low complexity" evidence="7">
    <location>
        <begin position="3487"/>
        <end position="3561"/>
    </location>
</feature>
<feature type="compositionally biased region" description="Low complexity" evidence="7">
    <location>
        <begin position="3956"/>
        <end position="3995"/>
    </location>
</feature>
<feature type="compositionally biased region" description="Polar residues" evidence="7">
    <location>
        <begin position="3996"/>
        <end position="4043"/>
    </location>
</feature>
<feature type="compositionally biased region" description="Low complexity" evidence="7">
    <location>
        <begin position="4044"/>
        <end position="4118"/>
    </location>
</feature>
<feature type="compositionally biased region" description="Low complexity" evidence="7">
    <location>
        <begin position="4259"/>
        <end position="4274"/>
    </location>
</feature>
<feature type="compositionally biased region" description="Low complexity" evidence="7">
    <location>
        <begin position="4283"/>
        <end position="4389"/>
    </location>
</feature>
<feature type="binding site" evidence="2">
    <location>
        <position position="194"/>
    </location>
    <ligand>
        <name>Cu(2+)</name>
        <dbReference type="ChEBI" id="CHEBI:29036"/>
    </ligand>
</feature>
<feature type="binding site" evidence="2">
    <location>
        <position position="311"/>
    </location>
    <ligand>
        <name>Cu(2+)</name>
        <dbReference type="ChEBI" id="CHEBI:29036"/>
    </ligand>
</feature>
<feature type="binding site" evidence="2">
    <location>
        <position position="358"/>
    </location>
    <ligand>
        <name>Cu(2+)</name>
        <dbReference type="ChEBI" id="CHEBI:29036"/>
    </ligand>
</feature>
<feature type="glycosylation site" description="N-linked (GlcNAc...) asparagine" evidence="10">
    <location>
        <position position="145"/>
    </location>
</feature>
<feature type="glycosylation site" description="N-linked (GlcNAc...) asparagine" evidence="3">
    <location>
        <position position="201"/>
    </location>
</feature>
<feature type="glycosylation site" description="N-linked (GlcNAc...) asparagine" evidence="10">
    <location>
        <position position="254"/>
    </location>
</feature>
<feature type="glycosylation site" description="N-linked (GlcNAc...) asparagine" evidence="3">
    <location>
        <position position="401"/>
    </location>
</feature>
<feature type="glycosylation site" description="N-linked (GlcNAc...) asparagine" evidence="3">
    <location>
        <position position="515"/>
    </location>
</feature>
<feature type="glycosylation site" description="N-linked (GlcNAc...) asparagine" evidence="3">
    <location>
        <position position="805"/>
    </location>
</feature>
<feature type="glycosylation site" description="N-linked (GlcNAc...) asparagine" evidence="3">
    <location>
        <position position="929"/>
    </location>
</feature>
<feature type="glycosylation site" description="N-linked (GlcNAc...) asparagine" evidence="3">
    <location>
        <position position="1276"/>
    </location>
</feature>
<feature type="glycosylation site" description="N-linked (GlcNAc...) asparagine" evidence="3">
    <location>
        <position position="1292"/>
    </location>
</feature>
<feature type="glycosylation site" description="C-linked (Man) tryptophan" evidence="20">
    <location>
        <position position="1340"/>
    </location>
</feature>
<feature type="glycosylation site" description="C-linked (Man) tryptophan" evidence="20">
    <location>
        <position position="1509"/>
    </location>
</feature>
<feature type="glycosylation site" description="N-linked (GlcNAc...) asparagine" evidence="10">
    <location>
        <position position="1556"/>
    </location>
</feature>
<feature type="glycosylation site" description="N-linked (GlcNAc...) asparagine" evidence="3">
    <location>
        <position position="1774"/>
    </location>
</feature>
<feature type="glycosylation site" description="C-linked (Man) tryptophan" evidence="20">
    <location>
        <position position="1790"/>
    </location>
</feature>
<feature type="glycosylation site" description="C-linked (Man) tryptophan" evidence="20">
    <location>
        <position position="2320"/>
    </location>
</feature>
<feature type="glycosylation site" description="N-linked (GlcNAc...) asparagine" evidence="3">
    <location>
        <position position="2749"/>
    </location>
</feature>
<feature type="glycosylation site" description="C-linked (Man) tryptophan" evidence="20">
    <location>
        <position position="2877"/>
    </location>
</feature>
<feature type="glycosylation site" description="N-linked (GlcNAc...) asparagine" evidence="3">
    <location>
        <position position="3449"/>
    </location>
</feature>
<feature type="glycosylation site" description="C-linked (Man) tryptophan" evidence="20">
    <location>
        <position position="3577"/>
    </location>
</feature>
<feature type="glycosylation site" description="N-linked (GlcNAc...) asparagine" evidence="3">
    <location>
        <position position="4006"/>
    </location>
</feature>
<feature type="glycosylation site" description="C-linked (Man) tryptophan" evidence="20">
    <location>
        <position position="4134"/>
    </location>
</feature>
<feature type="glycosylation site" description="N-linked (GlcNAc...) asparagine" evidence="3">
    <location>
        <position position="4804"/>
    </location>
</feature>
<feature type="glycosylation site" description="N-linked (GlcNAc...) asparagine" evidence="10">
    <location>
        <position position="4960"/>
    </location>
</feature>
<feature type="glycosylation site" description="N-linked (GlcNAc...) asparagine" evidence="10">
    <location>
        <position position="5017"/>
    </location>
</feature>
<feature type="glycosylation site" description="N-linked (GlcNAc...) asparagine" evidence="10">
    <location>
        <position position="5024"/>
    </location>
</feature>
<feature type="glycosylation site" description="N-linked (GlcNAc...) asparagine" evidence="10">
    <location>
        <position position="5046"/>
    </location>
</feature>
<feature type="glycosylation site" description="N-linked (GlcNAc...) asparagine" evidence="10">
    <location>
        <position position="5096"/>
    </location>
</feature>
<feature type="glycosylation site" description="N-linked (GlcNAc...) asparagine" evidence="10">
    <location>
        <position position="5111"/>
    </location>
</feature>
<feature type="glycosylation site" description="N-linked (GlcNAc...) asparagine" evidence="10">
    <location>
        <position position="5215"/>
    </location>
</feature>
<feature type="glycosylation site" description="N-linked (GlcNAc...) asparagine" evidence="3">
    <location>
        <position position="5486"/>
    </location>
</feature>
<feature type="glycosylation site" description="N-linked (GlcNAc...) asparagine" evidence="3">
    <location>
        <position position="5526"/>
    </location>
</feature>
<feature type="glycosylation site" description="N-linked (GlcNAc...) asparagine" evidence="3">
    <location>
        <position position="5565"/>
    </location>
</feature>
<feature type="glycosylation site" description="N-linked (GlcNAc...) asparagine" evidence="3">
    <location>
        <position position="5566"/>
    </location>
</feature>
<feature type="glycosylation site" description="N-linked (GlcNAc...) asparagine" evidence="3">
    <location>
        <position position="5602"/>
    </location>
</feature>
<feature type="glycosylation site" description="N-linked (GlcNAc...) asparagine" evidence="3">
    <location>
        <position position="5612"/>
    </location>
</feature>
<feature type="glycosylation site" description="N-linked (GlcNAc...) asparagine" evidence="3">
    <location>
        <position position="5663"/>
    </location>
</feature>
<feature type="glycosylation site" description="N-linked (GlcNAc...) asparagine" evidence="3">
    <location>
        <position position="5677"/>
    </location>
</feature>
<feature type="glycosylation site" description="N-linked (GlcNAc...) asparagine" evidence="3">
    <location>
        <position position="5721"/>
    </location>
</feature>
<feature type="disulfide bond" evidence="6">
    <location>
        <begin position="77"/>
        <end position="207"/>
    </location>
</feature>
<feature type="disulfide bond" evidence="6">
    <location>
        <begin position="99"/>
        <end position="244"/>
    </location>
</feature>
<feature type="disulfide bond" evidence="6">
    <location>
        <begin position="425"/>
        <end position="562"/>
    </location>
</feature>
<feature type="disulfide bond" evidence="6">
    <location>
        <begin position="447"/>
        <end position="597"/>
    </location>
</feature>
<feature type="disulfide bond" evidence="6">
    <location>
        <begin position="469"/>
        <end position="477"/>
    </location>
</feature>
<feature type="disulfide bond" evidence="6">
    <location>
        <begin position="895"/>
        <end position="1026"/>
    </location>
</feature>
<feature type="disulfide bond" evidence="6">
    <location>
        <begin position="917"/>
        <end position="1061"/>
    </location>
</feature>
<feature type="disulfide bond" evidence="6">
    <location>
        <begin position="926"/>
        <end position="1023"/>
    </location>
</feature>
<feature type="disulfide bond" evidence="6">
    <location>
        <begin position="944"/>
        <end position="951"/>
    </location>
</feature>
<feature type="disulfide bond" evidence="6">
    <location>
        <begin position="5075"/>
        <end position="5221"/>
    </location>
</feature>
<feature type="disulfide bond" evidence="6">
    <location>
        <begin position="5097"/>
        <end position="5260"/>
    </location>
</feature>
<feature type="disulfide bond" evidence="6">
    <location>
        <begin position="5121"/>
        <end position="5132"/>
    </location>
</feature>
<feature type="disulfide bond" evidence="1">
    <location>
        <begin position="5653"/>
        <end position="5705"/>
    </location>
</feature>
<feature type="disulfide bond" evidence="1">
    <location>
        <begin position="5672"/>
        <end position="5719"/>
    </location>
</feature>
<feature type="disulfide bond" evidence="1">
    <location>
        <begin position="5681"/>
        <end position="5735"/>
    </location>
</feature>
<feature type="disulfide bond" evidence="1">
    <location>
        <begin position="5685"/>
        <end position="5737"/>
    </location>
</feature>
<feature type="disulfide bond" evidence="1">
    <location>
        <begin status="unknown"/>
        <end position="5741"/>
    </location>
</feature>
<feature type="sequence variant" id="VAR_063616" description="In dbSNP:rs2672785." evidence="8 19">
    <original>E</original>
    <variation>G</variation>
    <location>
        <position position="34"/>
    </location>
</feature>
<feature type="sequence variant" id="VAR_056588" description="In dbSNP:rs2075853.">
    <original>R</original>
    <variation>W</variation>
    <location>
        <position position="51"/>
    </location>
</feature>
<feature type="sequence variant" id="VAR_059538" description="In dbSNP:rs12363494.">
    <original>T</original>
    <variation>M</variation>
    <location>
        <position position="1360"/>
    </location>
</feature>
<feature type="sequence variant" id="VAR_059539" description="In dbSNP:rs10835639.">
    <original>R</original>
    <variation>H</variation>
    <location>
        <position position="1401"/>
    </location>
</feature>
<feature type="sequence variant" id="VAR_063617" description="In dbSNP:rs1541314." evidence="15">
    <original>G</original>
    <variation>S</variation>
    <location>
        <position position="1805"/>
    </location>
</feature>
<feature type="sequence variant" id="VAR_063618" description="In dbSNP:rs2943510." evidence="15">
    <original>P</original>
    <variation>L</variation>
    <location>
        <position position="1889"/>
    </location>
</feature>
<feature type="sequence variant" id="VAR_063619" description="In dbSNP:rs34739266." evidence="15">
    <original>A</original>
    <variation>T</variation>
    <location>
        <position position="2025"/>
    </location>
</feature>
<feature type="sequence variant" id="VAR_059540" description="In dbSNP:rs1554937069.">
    <original>A</original>
    <variation>T</variation>
    <location>
        <position position="2027"/>
    </location>
</feature>
<feature type="sequence variant" id="VAR_063620" description="In dbSNP:rs2943502." evidence="15">
    <original>M</original>
    <variation>T</variation>
    <location>
        <position position="2194"/>
    </location>
</feature>
<feature type="sequence variant" id="VAR_063621" description="In dbSNP:rs4963031." evidence="15">
    <original>L</original>
    <variation>P</variation>
    <location>
        <position position="2238"/>
    </location>
</feature>
<feature type="sequence variant" id="VAR_063622" description="In dbSNP:rs3965632." evidence="15">
    <original>M</original>
    <variation>T</variation>
    <location>
        <position position="2425"/>
    </location>
</feature>
<feature type="sequence variant" id="VAR_059541" description="In dbSNP:rs60787297.">
    <original>T</original>
    <variation>M</variation>
    <location>
        <position position="2559"/>
    </location>
</feature>
<feature type="sequence variant" id="VAR_063623" description="In dbSNP:rs55813014." evidence="15">
    <original>F</original>
    <variation>S</variation>
    <location>
        <position position="3072"/>
    </location>
</feature>
<feature type="sequence variant" id="VAR_063624" description="In dbSNP:rs2943531." evidence="15">
    <original>T</original>
    <variation>A</variation>
    <location>
        <position position="3284"/>
    </location>
</feature>
<feature type="sequence variant" id="VAR_063625" description="In dbSNP:rs2943529." evidence="15">
    <original>R</original>
    <variation>P</variation>
    <location>
        <position position="3468"/>
    </location>
</feature>
<feature type="sequence variant" id="VAR_063626" description="In dbSNP:rs201948297." evidence="15">
    <original>T</original>
    <variation>M</variation>
    <location>
        <position position="3816"/>
    </location>
</feature>
<feature type="sequence variant" id="VAR_063627" description="In dbSNP:rs2943517." evidence="15">
    <original>A</original>
    <variation>G</variation>
    <location>
        <position position="4404"/>
    </location>
</feature>
<feature type="sequence variant" id="VAR_063628" description="In dbSNP:rs2943516." evidence="15">
    <original>P</original>
    <variation>L</variation>
    <location>
        <position position="4440"/>
    </location>
</feature>
<feature type="sequence variant" id="VAR_063629" description="In dbSNP:rs2943512." evidence="15">
    <original>T</original>
    <variation>P</variation>
    <location>
        <position position="4706"/>
    </location>
</feature>
<feature type="sequence variant" id="VAR_063630" description="In dbSNP:rs2943511." evidence="15">
    <original>T</original>
    <variation>M</variation>
    <location>
        <position position="4712"/>
    </location>
</feature>
<feature type="sequence variant" id="VAR_063631" description="In dbSNP:rs3021155." evidence="15">
    <original>A</original>
    <variation>T</variation>
    <location>
        <position position="4867"/>
    </location>
</feature>
<feature type="sequence variant" id="VAR_063632" description="In dbSNP:rs3021156." evidence="15">
    <original>T</original>
    <variation>A</variation>
    <location>
        <position position="4882"/>
    </location>
</feature>
<feature type="sequence variant" id="VAR_014123" description="In dbSNP:rs2672788." evidence="18">
    <original>S</original>
    <variation>T</variation>
    <location>
        <position position="5196"/>
    </location>
</feature>
<feature type="mutagenesis site" description="Poorly secreted." evidence="9">
    <original>W</original>
    <variation>A</variation>
    <location>
        <position position="1790"/>
    </location>
</feature>
<feature type="sequence conflict" description="In Ref. 2; AAC67545." evidence="20" ref="2">
    <original>FPGLCN</original>
    <variation>LPCLCK</variation>
    <location>
        <begin position="95"/>
        <end position="100"/>
    </location>
</feature>
<feature type="sequence conflict" description="In Ref. 2; AAC67545." evidence="20" ref="2">
    <original>S</original>
    <variation>C</variation>
    <location>
        <position position="104"/>
    </location>
</feature>
<feature type="sequence conflict" description="In Ref. 1; AAG33673." evidence="20" ref="1">
    <original>E</original>
    <variation>K</variation>
    <location>
        <position position="142"/>
    </location>
</feature>
<feature type="sequence conflict" description="In Ref. 2; AAC67545." evidence="20" ref="2">
    <original>R</original>
    <variation>S</variation>
    <location>
        <position position="225"/>
    </location>
</feature>
<feature type="sequence conflict" description="In Ref. 2; AAC67545." evidence="20" ref="2">
    <original>PL</original>
    <variation>T</variation>
    <location>
        <begin position="330"/>
        <end position="331"/>
    </location>
</feature>
<feature type="sequence conflict" description="In Ref. 2; AAC67545." evidence="20" ref="2">
    <original>E</original>
    <variation>N</variation>
    <location>
        <position position="337"/>
    </location>
</feature>
<feature type="sequence conflict" description="In Ref. 2; AAC67545." evidence="20" ref="2">
    <original>E</original>
    <variation>K</variation>
    <location>
        <position position="356"/>
    </location>
</feature>
<feature type="sequence conflict" description="In Ref. 2; AAC67545." evidence="20" ref="2">
    <original>G</original>
    <variation>R</variation>
    <location>
        <position position="362"/>
    </location>
</feature>
<feature type="sequence conflict" description="In Ref. 1; AAG33673." evidence="20" ref="1">
    <original>G</original>
    <variation>GS</variation>
    <location>
        <position position="368"/>
    </location>
</feature>
<feature type="sequence conflict" description="In Ref. 2; AAC67545." evidence="20" ref="2">
    <original>D</original>
    <variation>N</variation>
    <location>
        <position position="373"/>
    </location>
</feature>
<feature type="sequence conflict" description="In Ref. 2; AAC67545." evidence="20" ref="2">
    <original>RT</original>
    <variation>TR</variation>
    <location>
        <begin position="392"/>
        <end position="393"/>
    </location>
</feature>
<feature type="sequence conflict" description="In Ref. 2; AAC67545." evidence="20" ref="2">
    <original>RK</original>
    <variation>GR</variation>
    <location>
        <begin position="467"/>
        <end position="468"/>
    </location>
</feature>
<feature type="sequence conflict" description="In Ref. 2; AAC67545." evidence="20" ref="2">
    <original>L</original>
    <variation>P</variation>
    <location>
        <position position="511"/>
    </location>
</feature>
<feature type="sequence conflict" description="In Ref. 3; CAA06167." evidence="20" ref="3">
    <original>GAA</original>
    <variation>AH</variation>
    <location>
        <begin position="584"/>
        <end position="586"/>
    </location>
</feature>
<feature type="sequence conflict" description="In Ref. 3; CAA06167." evidence="20" ref="3">
    <original>A</original>
    <variation>S</variation>
    <location>
        <position position="600"/>
    </location>
</feature>
<feature type="sequence conflict" description="In Ref. 2; AAC67545." evidence="20" ref="2">
    <original>DP</original>
    <variation>RS</variation>
    <location>
        <begin position="627"/>
        <end position="628"/>
    </location>
</feature>
<feature type="sequence conflict" description="In Ref. 2; AAC67545." evidence="20" ref="2">
    <original>F</original>
    <variation>L</variation>
    <location>
        <position position="632"/>
    </location>
</feature>
<feature type="sequence conflict" description="In Ref. 3; CAA06167." evidence="20" ref="3">
    <original>A</original>
    <variation>P</variation>
    <location>
        <position position="675"/>
    </location>
</feature>
<feature type="sequence conflict" description="In Ref. 3; CAA06167." evidence="20" ref="3">
    <original>R</original>
    <variation>P</variation>
    <location>
        <position position="700"/>
    </location>
</feature>
<feature type="sequence conflict" description="In Ref. 2; AAC67545." evidence="20" ref="2">
    <original>E</original>
    <variation>K</variation>
    <location>
        <position position="751"/>
    </location>
</feature>
<feature type="sequence conflict" description="In Ref. 2; AAC67545." evidence="20" ref="2">
    <original>P</original>
    <variation>L</variation>
    <location>
        <position position="811"/>
    </location>
</feature>
<feature type="sequence conflict" description="In Ref. 2; AAC67545." evidence="20" ref="2">
    <original>LR</original>
    <variation>DG</variation>
    <location>
        <begin position="816"/>
        <end position="817"/>
    </location>
</feature>
<feature type="sequence conflict" description="In Ref. 2; AAC67545." evidence="20" ref="2">
    <original>HN</original>
    <variation>NK</variation>
    <location>
        <begin position="859"/>
        <end position="860"/>
    </location>
</feature>
<feature type="sequence conflict" description="In Ref. 2; AAC67545." evidence="20" ref="2">
    <original>P</original>
    <variation>L</variation>
    <location>
        <position position="866"/>
    </location>
</feature>
<feature type="sequence conflict" description="In Ref. 2; AAC67545." evidence="20" ref="2">
    <original>V</original>
    <variation>F</variation>
    <location>
        <position position="872"/>
    </location>
</feature>
<feature type="sequence conflict" description="In Ref. 2; AAC67545." evidence="20" ref="2">
    <original>R</original>
    <variation>T</variation>
    <location>
        <position position="883"/>
    </location>
</feature>
<feature type="sequence conflict" description="In Ref. 3; CAA06167." evidence="20" ref="3">
    <original>R</original>
    <variation>G</variation>
    <location>
        <position position="889"/>
    </location>
</feature>
<feature type="sequence conflict" description="In Ref. 2; AAC67545." evidence="20" ref="2">
    <original>G</original>
    <variation>A</variation>
    <location>
        <position position="1020"/>
    </location>
</feature>
<feature type="sequence conflict" description="In Ref. 2; AAC67545." evidence="20" ref="2">
    <original>Q</original>
    <variation>E</variation>
    <location>
        <position position="1082"/>
    </location>
</feature>
<feature type="sequence conflict" description="In Ref. 3; CAA06167." evidence="20" ref="3">
    <original>S</original>
    <variation>C</variation>
    <location>
        <position position="1144"/>
    </location>
</feature>
<feature type="sequence conflict" description="In Ref. 2; AAC67545." evidence="20" ref="2">
    <original>G</original>
    <variation>R</variation>
    <location>
        <position position="1195"/>
    </location>
</feature>
<feature type="sequence conflict" description="In Ref. 2; AAC67545." evidence="20" ref="2">
    <location>
        <position position="1207"/>
    </location>
</feature>
<feature type="sequence conflict" description="In Ref. 3; CAA06167." evidence="20" ref="3">
    <original>S</original>
    <variation>T</variation>
    <location>
        <position position="1291"/>
    </location>
</feature>
<feature type="sequence conflict" description="In Ref. 2; AAC67545." evidence="20" ref="2">
    <location>
        <position position="1317"/>
    </location>
</feature>
<feature type="sequence conflict" description="In Ref. 4; CAA96577." evidence="20" ref="4">
    <original>TTP</original>
    <variation>RQS</variation>
    <location>
        <begin position="1675"/>
        <end position="1677"/>
    </location>
</feature>
<feature type="sequence conflict" description="In Ref. 4; CAA96577." evidence="20" ref="4">
    <original>PT</original>
    <variation>AS</variation>
    <location>
        <begin position="1926"/>
        <end position="1927"/>
    </location>
</feature>
<feature type="sequence conflict" description="In Ref. 4; CAA96577." evidence="20" ref="4">
    <original>LR</original>
    <variation>QA</variation>
    <location>
        <begin position="1930"/>
        <end position="1931"/>
    </location>
</feature>
<feature type="sequence conflict" description="In Ref. 4; CAA96577." evidence="20" ref="4">
    <original>PPPKVLT</original>
    <variation>GTPHVS</variation>
    <location>
        <begin position="1934"/>
        <end position="1940"/>
    </location>
</feature>
<feature type="sequence conflict" description="In Ref. 4; CAA96577." evidence="20" ref="4">
    <original>S</original>
    <variation>F</variation>
    <location>
        <position position="1956"/>
    </location>
</feature>
<feature type="sequence conflict" description="In Ref. 4; CAA96577." evidence="20" ref="4">
    <original>VTP</original>
    <variation>FTA</variation>
    <location>
        <begin position="1980"/>
        <end position="1982"/>
    </location>
</feature>
<feature type="sequence conflict" description="In Ref. 4; CAA96577." evidence="20" ref="4">
    <original>T</original>
    <variation>M</variation>
    <location>
        <position position="2002"/>
    </location>
</feature>
<feature type="sequence conflict" description="In Ref. 4; CAA96577." evidence="20" ref="4">
    <original>A</original>
    <variation>V</variation>
    <location>
        <position position="2017"/>
    </location>
</feature>
<feature type="sequence conflict" description="In Ref. 4; CAA96577." evidence="20" ref="4">
    <original>P</original>
    <variation>L</variation>
    <location>
        <position position="2052"/>
    </location>
</feature>
<feature type="sequence conflict" description="In Ref. 4; CAA96577." evidence="20" ref="4">
    <original>TALTP</original>
    <variation>RARTL</variation>
    <location>
        <begin position="2069"/>
        <end position="2073"/>
    </location>
</feature>
<feature type="sequence conflict" description="In Ref. 4; CAA96577." evidence="20" ref="4">
    <original>A</original>
    <variation>P</variation>
    <location>
        <position position="2102"/>
    </location>
</feature>
<feature type="sequence conflict" description="In Ref. 4; CAA96577." evidence="20" ref="4">
    <original>N</original>
    <variation>S</variation>
    <location>
        <position position="2174"/>
    </location>
</feature>
<feature type="sequence conflict" description="In Ref. 4; CAA96577." evidence="20" ref="4">
    <original>P</original>
    <variation>S</variation>
    <location>
        <position position="2203"/>
    </location>
</feature>
<feature type="sequence conflict" description="In Ref. 4; CAA96577." evidence="20" ref="4">
    <original>R</original>
    <variation>C</variation>
    <location>
        <position position="2211"/>
    </location>
</feature>
<feature type="sequence conflict" description="In Ref. 4; CAA96577." evidence="20" ref="4">
    <original>V</original>
    <variation>G</variation>
    <location>
        <position position="2233"/>
    </location>
</feature>
<feature type="sequence conflict" description="In Ref. 4; CAA96577." evidence="20" ref="4">
    <original>S</original>
    <variation>Q</variation>
    <location>
        <position position="2300"/>
    </location>
</feature>
<feature type="sequence conflict" description="In Ref. 6; AAB61398." evidence="20" ref="6">
    <original>P</original>
    <variation>S</variation>
    <location>
        <position position="2333"/>
    </location>
</feature>
<feature type="sequence conflict" description="In Ref. 4; CAA96577." evidence="20" ref="4">
    <original>SSTPGTTWILTEPSTTATVTVPTGSTATASSTQATAGTPHVS</original>
    <variation>TSTLRTAPPPKVLT</variation>
    <location>
        <begin position="2456"/>
        <end position="2497"/>
    </location>
</feature>
<feature type="sequence conflict" description="In Ref. 6; AAB61398." evidence="20" ref="6">
    <original>TT</original>
    <variation>DD</variation>
    <location>
        <begin position="2461"/>
        <end position="2462"/>
    </location>
</feature>
<feature type="sequence conflict" description="In Ref. 6; AAB61398." evidence="20" ref="6">
    <location>
        <begin position="2468"/>
        <end position="3695"/>
    </location>
</feature>
<feature type="sequence conflict" description="In Ref. 4; CAA96577." evidence="20" ref="4">
    <original>F</original>
    <variation>S</variation>
    <location>
        <position position="2513"/>
    </location>
</feature>
<feature type="sequence conflict" description="In Ref. 4; CAA96577." evidence="20" ref="4">
    <original>FTA</original>
    <variation>VTP</variation>
    <location>
        <begin position="2537"/>
        <end position="2539"/>
    </location>
</feature>
<feature type="sequence conflict" description="In Ref. 4; CAA96577." evidence="20" ref="4">
    <original>V</original>
    <variation>A</variation>
    <location>
        <position position="2574"/>
    </location>
</feature>
<feature type="sequence conflict" description="In Ref. 4; CAA96577." evidence="20" ref="4">
    <original>T</original>
    <variation>A</variation>
    <location>
        <position position="2582"/>
    </location>
</feature>
<feature type="sequence conflict" description="In Ref. 4; CAA96577." evidence="20" ref="4">
    <original>L</original>
    <variation>P</variation>
    <location>
        <position position="2609"/>
    </location>
</feature>
<feature type="sequence conflict" description="In Ref. 4; CAA96577." evidence="20" ref="4">
    <original>RTL</original>
    <variation>LTP</variation>
    <location>
        <begin position="2628"/>
        <end position="2630"/>
    </location>
</feature>
<feature type="sequence conflict" description="In Ref. 4; CAA96577." evidence="20" ref="4">
    <original>P</original>
    <variation>A</variation>
    <location>
        <position position="2659"/>
    </location>
</feature>
<feature type="sequence conflict" description="In Ref. 4; CAA96577." evidence="20" ref="4">
    <original>T</original>
    <variation>R</variation>
    <location>
        <position position="2713"/>
    </location>
</feature>
<feature type="sequence conflict" description="In Ref. 4; CAA96577." evidence="20" ref="4">
    <original>R</original>
    <variation>T</variation>
    <location>
        <position position="2834"/>
    </location>
</feature>
<feature type="sequence conflict" description="In Ref. 4; CAA96577." evidence="20" ref="4">
    <original>T</original>
    <variation>Q</variation>
    <location>
        <position position="3028"/>
    </location>
</feature>
<feature type="sequence conflict" description="In Ref. 4; CAA96577." evidence="20" ref="4">
    <original>LPEQTTT</original>
    <variation>SQNRPPH</variation>
    <location>
        <begin position="3080"/>
        <end position="3086"/>
    </location>
</feature>
<feature type="sequence conflict" description="In Ref. 4; CAA96577." evidence="20" ref="4">
    <original>TGPTA</original>
    <variation>LPHG</variation>
    <location>
        <begin position="3148"/>
        <end position="3152"/>
    </location>
</feature>
<feature type="sequence conflict" description="In Ref. 4; CAA96577." evidence="20" ref="4">
    <location>
        <position position="3289"/>
    </location>
</feature>
<feature type="sequence conflict" description="In Ref. 4; CAA96577." evidence="20" ref="4">
    <original>V</original>
    <variation>G</variation>
    <location>
        <position position="3490"/>
    </location>
</feature>
<feature type="sequence conflict" description="In Ref. 4; CAA96577." evidence="20" ref="4">
    <original>S</original>
    <variation>G</variation>
    <location>
        <position position="3500"/>
    </location>
</feature>
<feature type="sequence conflict" description="In Ref. 4; CAA96577." evidence="20" ref="4">
    <original>H</original>
    <variation>P</variation>
    <location>
        <position position="3504"/>
    </location>
</feature>
<feature type="sequence conflict" description="In Ref. 4; CAA96577." evidence="20" ref="4">
    <original>PGTTWILTEPSTTATVTVPTGSTATASSTQAT</original>
    <variation>QGPP</variation>
    <location>
        <begin position="3716"/>
        <end position="3747"/>
    </location>
</feature>
<feature type="sequence conflict" description="In Ref. 6; AAB61398." evidence="20" ref="6">
    <original>Q</original>
    <variation>P</variation>
    <location>
        <position position="3811"/>
    </location>
</feature>
<feature type="sequence conflict" description="In Ref. 4; CAA96577." evidence="20" ref="4">
    <original>A</original>
    <variation>V</variation>
    <location>
        <position position="3831"/>
    </location>
</feature>
<feature type="sequence conflict" description="In Ref. 4; CAA96577." evidence="20" ref="4">
    <original>R</original>
    <variation>G</variation>
    <location>
        <position position="3845"/>
    </location>
</feature>
<feature type="sequence conflict" description="In Ref. 4; CAA96577." evidence="20" ref="4">
    <original>V</original>
    <variation>I</variation>
    <location>
        <position position="3909"/>
    </location>
</feature>
<feature type="sequence conflict" description="In Ref. 4; CAA96577." evidence="20" ref="4">
    <original>TT</original>
    <variation>QP</variation>
    <location>
        <begin position="3924"/>
        <end position="3925"/>
    </location>
</feature>
<feature type="sequence conflict" description="In Ref. 4; CAA96577." evidence="20" ref="4">
    <original>V</original>
    <variation>E</variation>
    <location>
        <position position="3975"/>
    </location>
</feature>
<feature type="sequence conflict" description="In Ref. 4; CAA96577." evidence="20" ref="4">
    <original>QH</original>
    <variation>TT</variation>
    <location>
        <begin position="4060"/>
        <end position="4061"/>
    </location>
</feature>
<feature type="sequence conflict" description="In Ref. 4; CAA96577." evidence="20" ref="4">
    <original>S</original>
    <variation>Q</variation>
    <location>
        <position position="4114"/>
    </location>
</feature>
<feature type="sequence conflict" description="In Ref. 4; CAA96577." evidence="20" ref="4">
    <original>Q</original>
    <variation>T</variation>
    <location>
        <position position="4177"/>
    </location>
</feature>
<feature type="sequence conflict" description="In Ref. 4; CAA52910." evidence="20" ref="4">
    <original>S</original>
    <variation>T</variation>
    <location>
        <position position="4313"/>
    </location>
</feature>
<feature type="sequence conflict" description="In Ref. 4; CAA96577." evidence="20" ref="4">
    <location>
        <position position="4373"/>
    </location>
</feature>
<feature type="sequence conflict" description="In Ref. 4; CAA96577." evidence="20" ref="4">
    <original>VPT</original>
    <variation>APP</variation>
    <location>
        <begin position="4461"/>
        <end position="4463"/>
    </location>
</feature>
<feature type="sequence conflict" description="In Ref. 4; CAA96577." evidence="20" ref="4">
    <original>A</original>
    <variation>T</variation>
    <location>
        <position position="4567"/>
    </location>
</feature>
<feature type="sequence conflict" description="In Ref. 7; AAC51344." evidence="20" ref="7">
    <original>T</original>
    <variation>P</variation>
    <location>
        <position position="4780"/>
    </location>
</feature>
<feature type="sequence conflict" description="In Ref. 8; AAB65151." evidence="20" ref="8">
    <original>R</original>
    <variation>A</variation>
    <location>
        <position position="5134"/>
    </location>
</feature>
<feature type="sequence conflict" description="In Ref. 8; AAB65151." evidence="20" ref="8">
    <original>Q</original>
    <variation>P</variation>
    <location>
        <position position="5164"/>
    </location>
</feature>
<feature type="sequence conflict" description="In Ref. 7; AAC51344 and 8; AAB65151." evidence="20" ref="7 8">
    <original>R</original>
    <variation>A</variation>
    <location>
        <position position="5187"/>
    </location>
</feature>
<feature type="sequence conflict" description="In Ref. 8; AAB65151." evidence="20" ref="8">
    <original>P</original>
    <variation>L</variation>
    <location>
        <position position="5289"/>
    </location>
</feature>
<feature type="sequence conflict" description="In Ref. 8; AAB65151." evidence="20" ref="8">
    <original>NLV</original>
    <variation>TLL</variation>
    <location>
        <begin position="5304"/>
        <end position="5306"/>
    </location>
</feature>
<feature type="sequence conflict" description="In Ref. 7; AAC51344." evidence="20" ref="7">
    <original>A</original>
    <variation>R</variation>
    <location>
        <position position="5333"/>
    </location>
</feature>
<feature type="sequence conflict" description="In Ref. 7; AAC51343/AAC51344." evidence="20" ref="7">
    <original>D</original>
    <variation>N</variation>
    <location>
        <position position="5397"/>
    </location>
</feature>
<feature type="sequence conflict" description="In Ref. 9; CAA70926." evidence="20" ref="9">
    <original>E</original>
    <variation>R</variation>
    <location>
        <position position="5474"/>
    </location>
</feature>
<feature type="sequence conflict" description="In Ref. 8; AAB65151." evidence="20" ref="8">
    <original>N</original>
    <variation>T</variation>
    <location>
        <position position="5475"/>
    </location>
</feature>
<feature type="sequence conflict" description="In Ref. 8; AAB65151." evidence="20" ref="8">
    <original>A</original>
    <variation>S</variation>
    <location>
        <position position="5620"/>
    </location>
</feature>
<feature type="sequence conflict" description="In Ref. 7; AAC51343." evidence="20" ref="7">
    <original>A</original>
    <variation>D</variation>
    <location>
        <position position="5632"/>
    </location>
</feature>
<feature type="sequence conflict" description="In Ref. 8; AAB65151." evidence="20" ref="8">
    <original>V</original>
    <variation>C</variation>
    <location>
        <position position="5660"/>
    </location>
</feature>
<feature type="strand" evidence="21">
    <location>
        <begin position="73"/>
        <end position="80"/>
    </location>
</feature>
<feature type="turn" evidence="21">
    <location>
        <begin position="81"/>
        <end position="83"/>
    </location>
</feature>
<feature type="strand" evidence="21">
    <location>
        <begin position="84"/>
        <end position="86"/>
    </location>
</feature>
<feature type="strand" evidence="21">
    <location>
        <begin position="92"/>
        <end position="94"/>
    </location>
</feature>
<feature type="strand" evidence="21">
    <location>
        <begin position="99"/>
        <end position="106"/>
    </location>
</feature>
<feature type="strand" evidence="21">
    <location>
        <begin position="108"/>
        <end position="111"/>
    </location>
</feature>
<feature type="strand" evidence="21">
    <location>
        <begin position="114"/>
        <end position="123"/>
    </location>
</feature>
<feature type="strand" evidence="21">
    <location>
        <begin position="126"/>
        <end position="136"/>
    </location>
</feature>
<feature type="strand" evidence="21">
    <location>
        <begin position="139"/>
        <end position="144"/>
    </location>
</feature>
<feature type="strand" evidence="21">
    <location>
        <begin position="147"/>
        <end position="150"/>
    </location>
</feature>
<feature type="strand" evidence="21">
    <location>
        <begin position="157"/>
        <end position="161"/>
    </location>
</feature>
<feature type="strand" evidence="21">
    <location>
        <begin position="164"/>
        <end position="167"/>
    </location>
</feature>
<feature type="strand" evidence="21">
    <location>
        <begin position="172"/>
        <end position="177"/>
    </location>
</feature>
<feature type="turn" evidence="21">
    <location>
        <begin position="178"/>
        <end position="180"/>
    </location>
</feature>
<feature type="strand" evidence="21">
    <location>
        <begin position="181"/>
        <end position="185"/>
    </location>
</feature>
<feature type="strand" evidence="21">
    <location>
        <begin position="187"/>
        <end position="189"/>
    </location>
</feature>
<feature type="strand" evidence="21">
    <location>
        <begin position="191"/>
        <end position="195"/>
    </location>
</feature>
<feature type="helix" evidence="21">
    <location>
        <begin position="197"/>
        <end position="199"/>
    </location>
</feature>
<feature type="helix" evidence="21">
    <location>
        <begin position="214"/>
        <end position="217"/>
    </location>
</feature>
<feature type="strand" evidence="21">
    <location>
        <begin position="218"/>
        <end position="220"/>
    </location>
</feature>
<feature type="helix" evidence="21">
    <location>
        <begin position="228"/>
        <end position="234"/>
    </location>
</feature>
<feature type="strand" evidence="21">
    <location>
        <begin position="257"/>
        <end position="259"/>
    </location>
</feature>
<feature type="helix" evidence="21">
    <location>
        <begin position="261"/>
        <end position="266"/>
    </location>
</feature>
<feature type="turn" evidence="21">
    <location>
        <begin position="270"/>
        <end position="272"/>
    </location>
</feature>
<feature type="helix" evidence="21">
    <location>
        <begin position="273"/>
        <end position="276"/>
    </location>
</feature>
<feature type="helix" evidence="21">
    <location>
        <begin position="281"/>
        <end position="292"/>
    </location>
</feature>
<feature type="helix" evidence="21">
    <location>
        <begin position="299"/>
        <end position="312"/>
    </location>
</feature>
<feature type="strand" evidence="21">
    <location>
        <begin position="334"/>
        <end position="339"/>
    </location>
</feature>
<feature type="turn" evidence="21">
    <location>
        <begin position="349"/>
        <end position="352"/>
    </location>
</feature>
<feature type="strand" evidence="21">
    <location>
        <begin position="360"/>
        <end position="364"/>
    </location>
</feature>
<feature type="turn" evidence="21">
    <location>
        <begin position="373"/>
        <end position="375"/>
    </location>
</feature>
<feature type="helix" evidence="21">
    <location>
        <begin position="382"/>
        <end position="384"/>
    </location>
</feature>
<feature type="strand" evidence="21">
    <location>
        <begin position="387"/>
        <end position="389"/>
    </location>
</feature>
<feature type="strand" evidence="21">
    <location>
        <begin position="392"/>
        <end position="394"/>
    </location>
</feature>
<feature type="strand" evidence="21">
    <location>
        <begin position="399"/>
        <end position="401"/>
    </location>
</feature>
<feature type="strand" evidence="21">
    <location>
        <begin position="403"/>
        <end position="410"/>
    </location>
</feature>
<feature type="strand" evidence="21">
    <location>
        <begin position="413"/>
        <end position="418"/>
    </location>
</feature>
<feature type="strand" evidence="21">
    <location>
        <begin position="423"/>
        <end position="428"/>
    </location>
</feature>
<feature type="turn" evidence="21">
    <location>
        <begin position="429"/>
        <end position="431"/>
    </location>
</feature>
<feature type="strand" evidence="21">
    <location>
        <begin position="432"/>
        <end position="434"/>
    </location>
</feature>
<feature type="strand" evidence="21">
    <location>
        <begin position="446"/>
        <end position="453"/>
    </location>
</feature>
<feature type="strand" evidence="21">
    <location>
        <begin position="459"/>
        <end position="468"/>
    </location>
</feature>
<feature type="strand" evidence="21">
    <location>
        <begin position="470"/>
        <end position="472"/>
    </location>
</feature>
<feature type="strand" evidence="21">
    <location>
        <begin position="476"/>
        <end position="485"/>
    </location>
</feature>
<feature type="turn" evidence="21">
    <location>
        <begin position="486"/>
        <end position="489"/>
    </location>
</feature>
<feature type="strand" evidence="21">
    <location>
        <begin position="490"/>
        <end position="498"/>
    </location>
</feature>
<feature type="strand" evidence="21">
    <location>
        <begin position="500"/>
        <end position="502"/>
    </location>
</feature>
<feature type="strand" evidence="21">
    <location>
        <begin position="511"/>
        <end position="513"/>
    </location>
</feature>
<feature type="strand" evidence="21">
    <location>
        <begin position="516"/>
        <end position="522"/>
    </location>
</feature>
<feature type="strand" evidence="21">
    <location>
        <begin position="525"/>
        <end position="529"/>
    </location>
</feature>
<feature type="strand" evidence="21">
    <location>
        <begin position="533"/>
        <end position="539"/>
    </location>
</feature>
<feature type="strand" evidence="21">
    <location>
        <begin position="541"/>
        <end position="543"/>
    </location>
</feature>
<feature type="strand" evidence="21">
    <location>
        <begin position="545"/>
        <end position="550"/>
    </location>
</feature>
<feature type="helix" evidence="21">
    <location>
        <begin position="552"/>
        <end position="554"/>
    </location>
</feature>
<feature type="turn" evidence="21">
    <location>
        <begin position="555"/>
        <end position="557"/>
    </location>
</feature>
<feature type="strand" evidence="21">
    <location>
        <begin position="569"/>
        <end position="571"/>
    </location>
</feature>
<feature type="strand" evidence="21">
    <location>
        <begin position="578"/>
        <end position="580"/>
    </location>
</feature>
<feature type="helix" evidence="21">
    <location>
        <begin position="584"/>
        <end position="588"/>
    </location>
</feature>
<feature type="strand" evidence="21">
    <location>
        <begin position="591"/>
        <end position="593"/>
    </location>
</feature>
<feature type="helix" evidence="21">
    <location>
        <begin position="607"/>
        <end position="609"/>
    </location>
</feature>
<feature type="helix" evidence="21">
    <location>
        <begin position="612"/>
        <end position="622"/>
    </location>
</feature>
<feature type="helix" evidence="21">
    <location>
        <begin position="633"/>
        <end position="636"/>
    </location>
</feature>
<feature type="helix" evidence="21">
    <location>
        <begin position="642"/>
        <end position="654"/>
    </location>
</feature>
<feature type="helix" evidence="21">
    <location>
        <begin position="658"/>
        <end position="676"/>
    </location>
</feature>
<feature type="helix" evidence="21">
    <location>
        <begin position="690"/>
        <end position="693"/>
    </location>
</feature>
<feature type="strand" evidence="21">
    <location>
        <begin position="700"/>
        <end position="705"/>
    </location>
</feature>
<feature type="helix" evidence="21">
    <location>
        <begin position="712"/>
        <end position="717"/>
    </location>
</feature>
<feature type="helix" evidence="21">
    <location>
        <begin position="721"/>
        <end position="723"/>
    </location>
</feature>
<feature type="strand" evidence="21">
    <location>
        <begin position="729"/>
        <end position="733"/>
    </location>
</feature>
<feature type="strand" evidence="21">
    <location>
        <begin position="738"/>
        <end position="740"/>
    </location>
</feature>
<feature type="strand" evidence="21">
    <location>
        <begin position="746"/>
        <end position="748"/>
    </location>
</feature>
<feature type="helix" evidence="21">
    <location>
        <begin position="749"/>
        <end position="751"/>
    </location>
</feature>
<feature type="strand" evidence="21">
    <location>
        <begin position="754"/>
        <end position="756"/>
    </location>
</feature>
<feature type="strand" evidence="21">
    <location>
        <begin position="759"/>
        <end position="761"/>
    </location>
</feature>
<feature type="strand" evidence="21">
    <location>
        <begin position="767"/>
        <end position="769"/>
    </location>
</feature>
<feature type="strand" evidence="21">
    <location>
        <begin position="772"/>
        <end position="777"/>
    </location>
</feature>
<feature type="strand" evidence="21">
    <location>
        <begin position="780"/>
        <end position="784"/>
    </location>
</feature>
<feature type="strand" evidence="21">
    <location>
        <begin position="795"/>
        <end position="797"/>
    </location>
</feature>
<feature type="strand" evidence="21">
    <location>
        <begin position="799"/>
        <end position="801"/>
    </location>
</feature>
<feature type="turn" evidence="21">
    <location>
        <begin position="803"/>
        <end position="805"/>
    </location>
</feature>
<feature type="helix" evidence="21">
    <location>
        <begin position="821"/>
        <end position="824"/>
    </location>
</feature>
<feature type="strand" evidence="21">
    <location>
        <begin position="834"/>
        <end position="836"/>
    </location>
</feature>
<feature type="strand" evidence="21">
    <location>
        <begin position="841"/>
        <end position="843"/>
    </location>
</feature>
<feature type="strand" evidence="21">
    <location>
        <begin position="845"/>
        <end position="847"/>
    </location>
</feature>
<feature type="strand" evidence="21">
    <location>
        <begin position="857"/>
        <end position="859"/>
    </location>
</feature>
<feature type="strand" evidence="21">
    <location>
        <begin position="862"/>
        <end position="864"/>
    </location>
</feature>
<feature type="strand" evidence="21">
    <location>
        <begin position="869"/>
        <end position="872"/>
    </location>
</feature>
<feature type="strand" evidence="21">
    <location>
        <begin position="875"/>
        <end position="880"/>
    </location>
</feature>
<feature type="strand" evidence="21">
    <location>
        <begin position="883"/>
        <end position="886"/>
    </location>
</feature>
<feature type="strand" evidence="21">
    <location>
        <begin position="893"/>
        <end position="898"/>
    </location>
</feature>
<feature type="turn" evidence="21">
    <location>
        <begin position="899"/>
        <end position="901"/>
    </location>
</feature>
<feature type="strand" evidence="21">
    <location>
        <begin position="902"/>
        <end position="904"/>
    </location>
</feature>
<feature type="strand" evidence="21">
    <location>
        <begin position="910"/>
        <end position="912"/>
    </location>
</feature>
<feature type="strand" evidence="21">
    <location>
        <begin position="919"/>
        <end position="924"/>
    </location>
</feature>
<feature type="strand" evidence="21">
    <location>
        <begin position="935"/>
        <end position="942"/>
    </location>
</feature>
<feature type="strand" evidence="21">
    <location>
        <begin position="944"/>
        <end position="949"/>
    </location>
</feature>
<feature type="strand" evidence="21">
    <location>
        <begin position="952"/>
        <end position="959"/>
    </location>
</feature>
<feature type="strand" evidence="21">
    <location>
        <begin position="964"/>
        <end position="967"/>
    </location>
</feature>
<feature type="strand" evidence="21">
    <location>
        <begin position="985"/>
        <end position="989"/>
    </location>
</feature>
<feature type="strand" evidence="21">
    <location>
        <begin position="992"/>
        <end position="996"/>
    </location>
</feature>
<feature type="strand" evidence="21">
    <location>
        <begin position="998"/>
        <end position="1004"/>
    </location>
</feature>
<feature type="strand" evidence="21">
    <location>
        <begin position="1006"/>
        <end position="1008"/>
    </location>
</feature>
<feature type="strand" evidence="21">
    <location>
        <begin position="1010"/>
        <end position="1014"/>
    </location>
</feature>
<feature type="helix" evidence="21">
    <location>
        <begin position="1016"/>
        <end position="1018"/>
    </location>
</feature>
<feature type="helix" evidence="21">
    <location>
        <begin position="1034"/>
        <end position="1036"/>
    </location>
</feature>
<feature type="helix" evidence="21">
    <location>
        <begin position="1048"/>
        <end position="1054"/>
    </location>
</feature>
<feature type="helix" evidence="21">
    <location>
        <begin position="1070"/>
        <end position="1073"/>
    </location>
</feature>
<feature type="helix" evidence="21">
    <location>
        <begin position="1075"/>
        <end position="1085"/>
    </location>
</feature>
<feature type="helix" evidence="21">
    <location>
        <begin position="1086"/>
        <end position="1088"/>
    </location>
</feature>
<feature type="helix" evidence="21">
    <location>
        <begin position="1091"/>
        <end position="1093"/>
    </location>
</feature>
<feature type="helix" evidence="21">
    <location>
        <begin position="1096"/>
        <end position="1098"/>
    </location>
</feature>
<feature type="helix" evidence="21">
    <location>
        <begin position="1103"/>
        <end position="1115"/>
    </location>
</feature>
<feature type="helix" evidence="21">
    <location>
        <begin position="1121"/>
        <end position="1139"/>
    </location>
</feature>
<feature type="strand" evidence="21">
    <location>
        <begin position="1148"/>
        <end position="1151"/>
    </location>
</feature>
<feature type="strand" evidence="21">
    <location>
        <begin position="1166"/>
        <end position="1168"/>
    </location>
</feature>
<feature type="strand" evidence="21">
    <location>
        <begin position="1178"/>
        <end position="1180"/>
    </location>
</feature>
<feature type="strand" evidence="21">
    <location>
        <begin position="1194"/>
        <end position="1198"/>
    </location>
</feature>
<feature type="strand" evidence="21">
    <location>
        <begin position="1206"/>
        <end position="1208"/>
    </location>
</feature>
<feature type="turn" evidence="21">
    <location>
        <begin position="1209"/>
        <end position="1212"/>
    </location>
</feature>
<feature type="strand" evidence="21">
    <location>
        <begin position="1213"/>
        <end position="1217"/>
    </location>
</feature>
<feature type="strand" evidence="21">
    <location>
        <begin position="1247"/>
        <end position="1251"/>
    </location>
</feature>
<feature type="strand" evidence="21">
    <location>
        <begin position="1334"/>
        <end position="1340"/>
    </location>
</feature>
<feature type="strand" evidence="21">
    <location>
        <begin position="1351"/>
        <end position="1354"/>
    </location>
</feature>
<feature type="strand" evidence="21">
    <location>
        <begin position="1356"/>
        <end position="1360"/>
    </location>
</feature>
<feature type="helix" evidence="21">
    <location>
        <begin position="1361"/>
        <end position="1367"/>
    </location>
</feature>
<feature type="strand" evidence="21">
    <location>
        <begin position="1379"/>
        <end position="1384"/>
    </location>
</feature>
<feature type="strand" evidence="21">
    <location>
        <begin position="1386"/>
        <end position="1388"/>
    </location>
</feature>
<feature type="helix" evidence="21">
    <location>
        <begin position="1390"/>
        <end position="1393"/>
    </location>
</feature>
<feature type="strand" evidence="21">
    <location>
        <begin position="1397"/>
        <end position="1400"/>
    </location>
</feature>
<feature type="turn" evidence="21">
    <location>
        <begin position="1401"/>
        <end position="1403"/>
    </location>
</feature>
<feature type="strand" evidence="21">
    <location>
        <begin position="1404"/>
        <end position="1408"/>
    </location>
</feature>
<feature type="helix" evidence="21">
    <location>
        <begin position="1409"/>
        <end position="1411"/>
    </location>
</feature>
<feature type="strand" evidence="21">
    <location>
        <begin position="1412"/>
        <end position="1415"/>
    </location>
</feature>
<feature type="strand" evidence="21">
    <location>
        <begin position="1420"/>
        <end position="1423"/>
    </location>
</feature>
<feature type="strand" evidence="21">
    <location>
        <begin position="1425"/>
        <end position="1431"/>
    </location>
</feature>
<name>MUC5B_HUMAN</name>
<comment type="function">
    <text>Gel-forming mucin that is thought to contribute to the lubricating and viscoelastic properties of whole saliva and cervical mucus.</text>
</comment>
<comment type="subunit">
    <text evidence="2 13">Homomultimer; disulfide-linked (PubMed:31570524). The N- and C-terminus mediate their assembly into higher order structures to form filaments (By similarity). The CTCK domains of two polypeptides associate in the endoplasmic reticulum to generate intermolecularly disulfide-bonded dimers (PubMed:31570524). These dimers progress to the Golgi apparatus, which is a more acidic environment than the endoplasmic reticulum (By similarity). Under acidic conditions, the N-termini form non-covalent intermolecular interactions that juxtapose assemblies from different CTCK-linked dimers to produce long, disulfide-linked polymers that remain highly compact until secretion (By similarity).</text>
</comment>
<comment type="subcellular location">
    <subcellularLocation>
        <location>Secreted</location>
    </subcellularLocation>
</comment>
<comment type="tissue specificity">
    <text evidence="8 14 16 17">Expressed on surface airway epithelia. Expressed mainly in mucous cells of submucosal glands of airway tissues. Highly expressed in the sublingual gland. Also found in submaxillary glands, endocervix, gall bladder, and pancreas.</text>
</comment>
<comment type="induction">
    <text evidence="8">Regulated by all-trans-retinoic acid (ATRA) in a cell-type specific manner.</text>
</comment>
<comment type="domain">
    <text evidence="13">The CTCK domain mediates interchain disulfide bonds with another molecule of MUC5B.</text>
</comment>
<comment type="domain">
    <text>The cysteine residues in the Cys-rich subdomain repeats are not involved in disulfide bonding.</text>
</comment>
<comment type="PTM">
    <text evidence="9 10">Highly glycosylated. C-, N- and O-glycosylated. C-mannosylated in the Cys-rich subdomains probably on the first Trp residue of the WXXW motif. Highly O-glycosylated in the Ser/Thr-rich tandem repeat (TR) region. The repeat region is about 59% O-glycosylated with a high abundance of NeuAc(2)Hex(1)HexNac1-ol.</text>
</comment>
<comment type="disease" evidence="11 12">
    <disease id="DI-02670">
        <name>Interstitial lung disease 2</name>
        <acronym>ILD2</acronym>
        <description>A form of interstitial lung disease, a heterogeneous group of diseases affecting the distal part of the lung and characterized by a progressive remodeling of the alveolar interstitium. The disease spectrum ranges from idiopathic interstitial pneumonia or pneumonitis to idiopathic pulmonary fibrosis, that is associated with an increased risk of developing lung cancer. Clinical features of interstitial lung disease include dyspnea, clubbing of the fingers, and restrictive lung capacity. ILD2 inheritance is autosomal dominant.</description>
        <dbReference type="MIM" id="178500"/>
    </disease>
    <text evidence="11">Disease susceptibility is associated with variants affecting the gene represented in this entry. A common polymorphism in the promoter of MUC5B is associated with familial interstitial pneumonia and idiopathic pulmonary fibrosis, suggesting that dysregulated MUC5B expression in the lung may be involved in the pathogenesis of pulmonary fibrosis (PubMed:21506741).</text>
</comment>
<comment type="sequence caution" evidence="20">
    <conflict type="erroneous initiation">
        <sequence resource="EMBL-CDS" id="CAA06167"/>
    </conflict>
    <text>Truncated N-terminus.</text>
</comment>
<comment type="online information" name="Mucin database">
    <link uri="http://www.medkem.gu.se/mucinbiology/databases/"/>
</comment>
<gene>
    <name type="primary">MUC5B</name>
    <name type="synonym">MUC5</name>
</gene>
<evidence type="ECO:0000250" key="1"/>
<evidence type="ECO:0000250" key="2">
    <source>
        <dbReference type="UniProtKB" id="Q02817"/>
    </source>
</evidence>
<evidence type="ECO:0000255" key="3"/>
<evidence type="ECO:0000255" key="4">
    <source>
        <dbReference type="PROSITE-ProRule" id="PRU00039"/>
    </source>
</evidence>
<evidence type="ECO:0000255" key="5">
    <source>
        <dbReference type="PROSITE-ProRule" id="PRU00220"/>
    </source>
</evidence>
<evidence type="ECO:0000255" key="6">
    <source>
        <dbReference type="PROSITE-ProRule" id="PRU00580"/>
    </source>
</evidence>
<evidence type="ECO:0000256" key="7">
    <source>
        <dbReference type="SAM" id="MobiDB-lite"/>
    </source>
</evidence>
<evidence type="ECO:0000269" key="8">
    <source>
    </source>
</evidence>
<evidence type="ECO:0000269" key="9">
    <source>
    </source>
</evidence>
<evidence type="ECO:0000269" key="10">
    <source>
    </source>
</evidence>
<evidence type="ECO:0000269" key="11">
    <source>
    </source>
</evidence>
<evidence type="ECO:0000269" key="12">
    <source>
    </source>
</evidence>
<evidence type="ECO:0000269" key="13">
    <source>
    </source>
</evidence>
<evidence type="ECO:0000269" key="14">
    <source>
    </source>
</evidence>
<evidence type="ECO:0000269" key="15">
    <source>
    </source>
</evidence>
<evidence type="ECO:0000269" key="16">
    <source>
    </source>
</evidence>
<evidence type="ECO:0000269" key="17">
    <source>
    </source>
</evidence>
<evidence type="ECO:0000269" key="18">
    <source>
    </source>
</evidence>
<evidence type="ECO:0000269" key="19">
    <source>
    </source>
</evidence>
<evidence type="ECO:0000305" key="20"/>
<evidence type="ECO:0007829" key="21">
    <source>
        <dbReference type="PDB" id="8OES"/>
    </source>
</evidence>
<proteinExistence type="evidence at protein level"/>
<sequence length="5762" mass="596340">MGAPSACRTLVLALAAMLVVPQAETQGPVEPSWENAGHTMDGGAPTSSPTRRVSFVPPVTVFPSLSPLNPAHNGRVCSTWGDFHYKTFDGDVFRFPGLCNYVFSEHCRAAYEDFNVQLRRGLVGSRPVVTRVVIKAQGLVLEASNGSVLINGQREELPYSRTGLLVEQSGDYIKVSIRLVLTFLWNGEDSALLELDPKYANQTCGLCGDFNGLPAFNEFYAHNARLTPLQFGNLQKLDGPTEQCPDPLPLPAGNCTDEEGICHRTLLGPAFAECHALVDSTAYLAACAQDLCRCPTCPCATFVEYSRQCAHAGGQPRNWRCPELCPRTCPLNMQHQECGSPCTDTCSNPQRAQLCEDHCVDGCFCPPGTVLDDITHSGCLPLGQCPCTHGGRTYSPGTSFNTTCSSCTCSGGLWQCQDLPCPGTCSVQGGAHISTYDEKLYDLHGDCSYVLSKKCADSSFTVLAELRKCGLTDNENCLKAVTLSLDGGDTAIRVQADGGVFLNSIYTQLPLSAANITLFTPSSFFIVVQTGLGLQLLVQLVPLMQVFVRLDPAHQGQMCGLCGNFNQNQADDFTALSGVVEATGAAFANTWKAQAACANARNSFEDPCSLSVENENYARHWCSRLTDPNSAFSRCHSIINPKPFHSNCMFDTCNCERSEDCLCAALSSYVHACAAKGVQLSDWRDGVCTKYMQNCPKSQRYAYVVDACQPTCRGLSEADVTCSVSFVPVDGCTCPAGTFLNDAGACVPAQECPCYAHGTVLAPGEVVHDEGAVCSCTGGKLSCLGASLQKSTGCAAPMVYLDCSNSSAGTPGAECLRSCHTLDVGCFSTHCVSGCVCPPGLVSDGSGGCIAEEDCPCVHNEATYKPGETIRVDCNTCTCRNRRWECSHRLCLGTCVAYGDGHFITFDGDRYSFEGSCEYILAQDYCGDNTTHGTFRIVTENIPCGTTGTTCSKAIKLFVESYELILQEGTFKAVARGPGGDPPYKIRYMGIFLVIETHGMAVSWDRKTSVFIRLHQDYKGRVCGLCGNFDDNAINDFATRSRSVVGDALEFGNSWKLSPSCPDALAPKDPCTANPFRKSWAQKQCSILHGPTFAACRSQVDSTKYYEACVNDACACDSGGDCECFCTAVAAYAQACHDAGLCVSWRTPDTCPLFCDFYNPHGGCEWHYQPCGAPCLKTCRNPSGHCLVDLPGLEGCYPKCPPSQPFFNEDQMKCVAQCGCYDKDGNYYDVGARVPTAENCQSCNCTPSGIQCAHSLEACTCTYEDRTYSYQDVIYNTTDGLGACLIAICGSNGTIIRKAVACPGTPATTPFTFTTAWVPHSTTSPALPVSTVCVREVCRWSSWYNGHRPEPGLGGGDFETFENLRQRGYQVCPVLADIECRAAQLPDMPLEELGQQVDCDRMRGLMCANSQQSPPLCHDYELRVLCCEYVPCGPSPAPGTSPQPSLSASTEPAVPTPTQTTATEKTTLWVTPSIRSTAALTSQTGSSSGPVTVTPSAPGTTTCQPRCQWTEWFDEDYPKSEQLGGDVESYDKIRAAGGHLCQQPKDIECQAESFPNWTLAQVGQKVHCDVHFGLVCRNWEQEGVFKMCYNYRIRVLCCSDDHCRGRATTPPPTTELETATTTTTQALFSTPQPTSSPGLTRAPPASTTAVPTLSEGLTSPRYTSTLGTATTGGPTTPAGSTEPTVPGVATSTLPTRSALPGTTGSLGTWRPSQPPTLAPTTMATSRARPTGTASTASKEPLTTSLAPTLTSELSTSQAETSTPRTETTMSPLTNTTTSQGTTRCQPKCEWTEWFDVDFPTSGVAGGDMETFENIRAAGGKMCWAPKSIECRAENYPEVSIDQVGQVLTCSLETGLTCKNEDQTGRFNMCFNYNVRVLCCDDYSHCPSTPATSSTATPSSTPGTTWILTKPTTTATTTASTGSTATPTSTLRTAPPPKVLTTTATTPTVTSSKATPSSSPGTATALPALRSTATTPTATSVTPIPSSSLGTTWTRLSQTTTPTATMSTATPSSTPETAHTSTVLTATATTTGATGSVATPSSTPGTAHTTKVPTTTTTGFTATPSSSPGTALTPPVWISTTTTPTTRGSTVTPSSIPGTTHTATVLTTTTTTVATGSMATPSSSTQTSGTPPSLTTTATTITATGSTTNPSSTPGTTPIPPVLTTTATTPAATSNTVTPSSALGTTHTPPVPNTMATTHGRSLPPSSPHTVRTAWTSATSGILGTTHITEPSTVTSHTLAATTGTTQHSTPALSSPHPSSRTTESPPSPGTTTPGHTTATSRTTATATPSKTRTSTLLPSSPTSAPITTVVTMGCEPQCAWSEWLDYSYPMPGPSGGDFDTYSNIRAAGGAVCEQPLGLECRAQAQPGVPLRELGQVVECSLDFGLVCRNREQVGKFKMCFNYEIRVFCCNYGHCPSTPATSSTAMPSSTPGTTWILTELTTTATTTESTGSTATPSSTPGTTWILTEPSTTATVTVPTGSTATASSTQATAGTPHVSTTATTPTVTSSKATPFSSPGTATALPALRSTATTPTATSFTAIPSSSLGTTWTRLSQTTTPTATMSTATPSSTPETVHTSTVLTTTATTTGATGSVATPSSTPGTAHTTKVLTTTTTGFTATPSSSPGTARTLPVWISTTTTPTTRGSTVTPSSIPGTTHTPTVLTTTTTTVATGSMATPSSSTQTSGTPPSLTTTATTITATGSTTNPSSTPGTTPIPPVLTTTATTPAATSSTVTPSSALGTTHTPPVPNTTATTHGRSLSPSSPHTVRTAWTSATSGTLGTTHITEPSTGTSHTPAATTGTTQHSTPALSSPHPSSRTTESPPSPGTTTPGHTRATSRTTATATPSKTRTSTLLPSSPTSAPITTVVTMGCEPQCAWSEWLDYSYPMPGPSGGDFDTYSNIRAAGGAVCEQPLGLECRAQAQPGVPLRELGQVVECSLDFGLVCRNREQVGKFKMCFNYEIRVFCCNYGHCPSTPATSSTATPSSTPGTTWILTEQTTAATTTATTGSTAIPSSTPGTAPPPKVLTSTATTPTATSSKATSSSSPRTATTLPVLTSTATKSTATSFTPIPSFTLGTTGTLPEQTTTPMATMSTIHPSSTPETTHTSTVLTTKATTTRATSSMSTPSSTPGTTWILTELTTAATTTAATGPTATPSSTPGTTWILTEPSTTATVTVPTGSTATASSTRATAGTLKVLTSTATTPTVISSRATPSSSPGTATALPALRSTATTPTATSVTAIPSSSLGTAWTRLSQTTTPTATMSTATPSSTPETVHTSTVLTTTTTTTRATGSVATPSSTPGTAHTTKVPTTTTTGFTATPSSSPGTALTPPVWISTTTTPTTRGSTVTPSSIPGTTHTATVLTTTTTTVATGSMATPSSSTQTSGTPPSLTTTATTITATGSTTNPSSTPGTTPIPPVLTTTATTPAATSSTVTPSSALGTTHTPPVPNTTATTHGRSLPPSSPHTVRTAWTSATSGILGTTHITEPSTVTSHTPAATTSTTQHSTPALSSPHPSSRTTESPPSPGTTTPGHTRGTSRTTATATPSKTRTSTLLPSSPTSAPITTVVTTGCEPQCAWSEWLDYSYPMPGPSGGDFDTYSNIRAAGGAVCEQPLGLECRAQAQPGVPLRELGQVVECSLDFGLVCRNREQVGKFKMCFNYEIRVFCCNYGHCPSTPATSSTATPSSTPGTTWILTKLTTTATTTESTGSTATPSSTPGTTWILTEPSTTATVTVPTGSTATASSTQATAGTPHVSTTATTPTVTSSKATPFSSPGTATALPALRSTATTPTATSFTAIPSSSLGTTWTRLSQTTTPTATMSTATPSSTPETAHTSTVLTTTATTTRATGSVATPSSTPGTAHTTKVPTTTTTGFTVTPSSSPGTARTPPVWISTTTTPTTSGSTVTPSSVPGTTHTPTVLTTTTTTVATGSMATPSSSTQTSGTPPSLITTATTITATGSTTNPSSTPGTTPIPPVLTTTATTPAATSSTVTPSSALGTTHTPPVPNTTATTHGRSLSPSSPHTVRTAWTSATSGTLGTTHITEPSTGTSHTPAATTGTTQHSTPALSSPHPSSRTTESPPSPGTTTPGHTTATSRTTATATPSKTRTSTLLPSSPTSAPITTVVTTGCEPQCAWSEWLDYSYPMPGPSGGDFDTYSNIRAAGGAVCEQPLGLECRAQAQPGVPLGELGQVVECSLDFGLVCRNREQVGKFKMCFNYEIRVFCCNYGHCPSTPATSSTAMPSSTPGTTWILTELTTTATTTASTGSTATPSSTPGTAPPPKVLTSPATTPTATSSKATSSSSPRTATTLPVLTSTATKSTATSVTPIPSSTLGTTGTLPEQTTTPVATMSTIHPSSTPETTHTSTVLTTKATTTRATSSTSTPSSTPGTTWILTELTTAATTTAATGPTATPSSTPGTTWILTELTTTATTTASTGSTATPSSTPGTTWILTEPSTTATVTVPTGSTATASSTQATAGTPHVSTTATTPTVTSSKATPSSSPGTATALPALRSTATTPTATSFTAIPSSSLGTTWTRLSQTTTPTATMSTATPSSTPETVHTSTVLTATATTTGATGSVATPSSTPGTAHTTKVPTTTTTGFTATPSSSPGTALTPPVWISTTTTPTTTTPTTSGSTVTPSSIPGTTHTARVLTTTTTTVATGSMATPSSSTQTSGTPPSLTTTATTITATGSTTNPSSTPGTTPITPVLTSTATTPAATSSKATSSSSPRTATTLPVLTSTATKSTATSFTPIPSSTLWTTWTVPAQTTTPMSTMSTIHTSSTPETTHTSTVLTTTATMTRATNSTATPSSTLGTTRILTELTTTATTTAATGSTATLSSTPGTTWILTEPSTIATVMVPTGSTATASSTLGTAHTPKVVTTMATMPTATASTVPSSSTVGTTRTPAVLPSSLPTFSVSTVSSSVLTTLRPTGFPSSHFSTPCFCRAFGQFFSPGEVIYNKTDRAGCHFYAVCNQHCDIDRFQGACPTSPPPVSSAPLSSPSPAPGCDNAIPLRQVNETWTLENCTVARCVGDNRVVLLDPKPVANVTCVNKHLPIKVSDPSQPCDFHYECECICSMWGGSHYSTFDGTSYTFRGNCTYVLMREIHARFGNLSLYLDNHYCTASATAAAARCPRALSIHYKSMDIVLTVTMVHGKEEGLILFDQIPVSSGFSKNGVLVSVLGTTTMRVDIPALGVSVTFNGQVFQARLPYSLFHNNTEGQCGTCTNNQRDDCLQRDGTTAASCKDMAKTWLVPDSRKDGCWAPTGTPPTASPAAPVSSTPTPTPCPPQPLCDLMLSQVFAECHNLVPPGPFFNACISDHCRGRLEVPCQSLEAYAELCRARGVCSDWRGATGGLCDLTCPPTKVYKPCGPIQPATCNSRNQSPQLEGMAEGCFCPEDQILFNAHMGICVQACPCVGPDGFPKFPGERWVSNCQSCVCDEGSVSVQCKPLPCDAQGQPPPCNRPGFVTVTRPRAENPCCPETVCVCNTTTCPQSLPVCPPGQESICTQEEGDCCPTFRCRPQLCSYNGTFYGVGATFPGALPCHMCTCLSGDTQDPTVQCQEDACNNTTCPQGFEYKRVAGQCCGECVQTACLTPDGQPVQLNETWVNSHVDNCTVYLCEAEGGVHLLTPQPASCPDVSSCRGSLRKTGCCYSCEEDSCQVRINTTILWHQGCETEVNITFCEGSCPGASKYSAEAQAMQHQCTCCQERRVHEETVPLHCPNGSAILHTYTHVDECGCTPFCVPAPMAPPHTRGFPAQEATAV</sequence>